<name>G3BP1_HUMAN</name>
<comment type="function">
    <text evidence="6 7 10 13 19 25 26 28 29 30 31 32 33 34 35 36 37 40">Protein involved in various processes, such as stress granule formation and innate immunity (PubMed:12642610, PubMed:20180778, PubMed:23279204, PubMed:30510222, PubMed:30804210). Plays an essential role in stress granule formation (PubMed:12642610, PubMed:20180778, PubMed:23279204, PubMed:32302570, PubMed:32302571, PubMed:32302572, PubMed:34739333, PubMed:35977029, PubMed:36183834, PubMed:36279435, PubMed:36692217, PubMed:37379838). Stress granules are membraneless compartments that store mRNAs and proteins, such as stalled translation pre-initiation complexes, in response to stress (PubMed:12642610, PubMed:20180778, PubMed:23279204, PubMed:27022092, PubMed:32302570, PubMed:32302571, PubMed:32302572, PubMed:36279435, PubMed:37379838). Promotes formation of stress granules phase-separated membraneless compartment by undergoing liquid-liquid phase separation (LLPS) upon unfolded RNA-binding: functions as a molecular switch that triggers RNA-dependent LLPS in response to a rise in intracellular free RNA concentrations (PubMed:32302570, PubMed:32302571, PubMed:32302572, PubMed:34739333, PubMed:36279435, PubMed:36692217). Also acts as an ATP- and magnesium-dependent helicase: unwinds DNA/DNA, RNA/DNA, and RNA/RNA substrates with comparable efficiency (PubMed:9889278). Acts unidirectionally by moving in the 5' to 3' direction along the bound single-stranded DNA (PubMed:9889278). Unwinds preferentially partial DNA and RNA duplexes having a 17 bp annealed portion and either a hanging 3' tail or hanging tails at both 5'- and 3'-ends (PubMed:9889278). Plays an essential role in innate immunity by promoting CGAS and RIGI activity (PubMed:30510222, PubMed:30804210). Participates in the DNA-triggered cGAS/STING pathway by promoting the DNA binding and activation of CGAS (PubMed:30510222). Triggers the condensation of cGAS, a process probably linked to the formation of membrane-less organelles (PubMed:34779554). Also enhances RIGI-induced type I interferon production probably by helping RIGI at sensing pathogenic RNA (PubMed:30804210). May also act as a phosphorylation-dependent sequence-specific endoribonuclease in vitro: Cleaves exclusively between cytosine and adenine and cleaves MYC mRNA preferentially at the 3'-UTR (PubMed:11604510).</text>
</comment>
<comment type="catalytic activity">
    <reaction evidence="40">
        <text>ATP + H2O = ADP + phosphate + H(+)</text>
        <dbReference type="Rhea" id="RHEA:13065"/>
        <dbReference type="ChEBI" id="CHEBI:15377"/>
        <dbReference type="ChEBI" id="CHEBI:15378"/>
        <dbReference type="ChEBI" id="CHEBI:30616"/>
        <dbReference type="ChEBI" id="CHEBI:43474"/>
        <dbReference type="ChEBI" id="CHEBI:456216"/>
        <dbReference type="EC" id="3.6.4.12"/>
    </reaction>
</comment>
<comment type="catalytic activity">
    <reaction evidence="40">
        <text>ATP + H2O = ADP + phosphate + H(+)</text>
        <dbReference type="Rhea" id="RHEA:13065"/>
        <dbReference type="ChEBI" id="CHEBI:15377"/>
        <dbReference type="ChEBI" id="CHEBI:15378"/>
        <dbReference type="ChEBI" id="CHEBI:30616"/>
        <dbReference type="ChEBI" id="CHEBI:43474"/>
        <dbReference type="ChEBI" id="CHEBI:456216"/>
        <dbReference type="EC" id="3.6.4.13"/>
    </reaction>
</comment>
<comment type="cofactor">
    <cofactor evidence="40">
        <name>Mg(2+)</name>
        <dbReference type="ChEBI" id="CHEBI:18420"/>
    </cofactor>
    <text evidence="40">Mg(2+) is required for helicase activity.</text>
</comment>
<comment type="activity regulation">
    <text evidence="28 29 30">Under physiological conditions, G3BP1 adopts a compact state that is stabilized by intramolecular interactions between the RG-rich and the acidic regions that inhibit phase separation (PubMed:32302570, PubMed:32302571, PubMed:32302572). Upon stress, polysomes disassemble and mRNAs are released in an unfolded protein-free state (PubMed:32302570, PubMed:32302571, PubMed:32302572). Binding of unfolded mRNA to G3BP1 outcompetes the intramolecular interactions and RNA-bound G3BP1 adopts an expanded conformation in which the RG-rich region becomes exposed to engage in protein-protein and protein-RNA interactions, allowing physical cross-linking of RNA molecules to form protein-RNA condensates, leading to liquid-liquid phase separation (LLPS) (PubMed:32302570, PubMed:32302571, PubMed:32302572).</text>
</comment>
<comment type="subunit">
    <text evidence="1 5 7 8 10 12 13 15 16 19 25 26 27 28 29 30 32 34 35 37">Homodimer and oligomer (PubMed:12642610, PubMed:24324649). Component of a TAU mRNP complex, at least composed of IGF2BP1, ELAVL4 and G3BP1 (By similarity). Binds to the SH3 domain of Ras GTPase-activating protein (RASA1) in proliferating cells (By similarity). No interaction in quiescent cells (By similarity). Interacts (via NTF2 domain) with USP10; inhibiting stress granule formation by lowering G3BP1 valence (PubMed:11439350, PubMed:23279204, PubMed:27022092, PubMed:31981475, PubMed:32302570, PubMed:36183834, PubMed:36279435). Interacts (via NTF2 domain) with CAPRIN1; promoting stress granule formation by lowering the saturation-concentration of G3BP1 (PubMed:17210633, PubMed:27022092, PubMed:32302570, PubMed:32302571, PubMed:32302572, PubMed:36183834, PubMed:36279435). Interacts (via NTF2 domain) with UBAP2L; promoting stress granule formation (PubMed:32302570). Associates (via RG-rich region) with 40S ribosome subunits (PubMed:27022092). Interacts with RPTOR and SPAG5; this complex is increased by oxidative stress (PubMed:23953116). Interacts with ATXN2L (PubMed:23209657). Interacts with STYXL1 (PubMed:20180778). Interacts with CGAS (via N-terminus); this interaction promotes the DNA-binding and activation of CGAS (PubMed:30510222, PubMed:34779554). Interacts (via C-terminus) with RIGI (PubMed:30804210). Interacts with PABPC1 (PubMed:23279204). Interacts with QKI (isoforms QKI6 and QKI7); directing N(7)-methylguanine-containing mRNAs to stress granules (PubMed:37379838).</text>
</comment>
<comment type="subunit">
    <text evidence="11 17 18 20">(Microbial infection) Interacts with Semliki forest virus non-structural protein 3 (via C-terminus); this interaction inhibits the formation of stress granules on viral mRNAs and the nsp3-G3BP1 complexes bind viral RNAs and probably orchestrate the assembly of viral replication complexes.</text>
</comment>
<comment type="subunit">
    <text evidence="17 18">(Microbial infection) Interacts with Chikungunya virus non-structural protein 3 (via C-terminus); this interaction inhibits the formation of stress granules on viral mRNAs and the nsp3-G3BP1 complexes bind viral RNAs and probably orchestrate the assembly of viral replication complexes.</text>
</comment>
<comment type="subunit">
    <text evidence="9">(Microbial infection) Interacts with Sindbis virus non-structural protein 3 (via C-terminus); this interaction inhibits the formation of stress granules on viral mRNAs and the nsp3-G3BP1 complexes bind viral RNAs and probably orchestrate the assembly of viral replication complexes.</text>
</comment>
<comment type="subunit">
    <text evidence="21">(Microbial infection) Interacts with Zika virus capsid protein C; this interaction is probably linked to the inhibition of stress granules formation by the virus.</text>
</comment>
<comment type="subunit">
    <text evidence="22">(Microbial infection) Interacts with reovirus type 2 protein sigma-NS; this interaction induces the relocalization of G3BP1 to the outer periphery of sigma-NS/mu-Ns viral factories and is probably involved in the suppression of the integrated stress response by the virus.</text>
</comment>
<comment type="subunit">
    <text evidence="38">(Microbial infection) Interacts with SARS-CoV-2 N protein; the interaction is enhanced by host HDAC6 which deacetylates the viral N protein and promotes N protein association with G3BP1, disrupting stress granule formation and facilitating viral replication (PubMed:39135075). Interacts with HDAC6; the interaction increases during SARS-CoV-2 infection (PubMed:39135075).</text>
</comment>
<comment type="interaction">
    <interactant intactId="EBI-1047359">
        <id>Q13283</id>
    </interactant>
    <interactant intactId="EBI-697691">
        <id>Q99700</id>
        <label>ATXN2</label>
    </interactant>
    <organismsDiffer>false</organismsDiffer>
    <experiments>4</experiments>
</comment>
<comment type="interaction">
    <interactant intactId="EBI-1047359">
        <id>Q13283</id>
    </interactant>
    <interactant intactId="EBI-948363">
        <id>Q8WWM7</id>
        <label>ATXN2L</label>
    </interactant>
    <organismsDiffer>false</organismsDiffer>
    <experiments>6</experiments>
</comment>
<comment type="interaction">
    <interactant intactId="EBI-1047359">
        <id>Q13283</id>
    </interactant>
    <interactant intactId="EBI-1047080">
        <id>Q14444</id>
        <label>CAPRIN1</label>
    </interactant>
    <organismsDiffer>false</organismsDiffer>
    <experiments>8</experiments>
</comment>
<comment type="interaction">
    <interactant intactId="EBI-1047359">
        <id>Q13283</id>
    </interactant>
    <interactant intactId="EBI-742651">
        <id>P35638</id>
        <label>DDIT3</label>
    </interactant>
    <organismsDiffer>false</organismsDiffer>
    <experiments>2</experiments>
</comment>
<comment type="interaction">
    <interactant intactId="EBI-1047359">
        <id>Q13283</id>
    </interactant>
    <interactant intactId="EBI-366305">
        <id>Q06787</id>
        <label>FMR1</label>
    </interactant>
    <organismsDiffer>false</organismsDiffer>
    <experiments>7</experiments>
</comment>
<comment type="interaction">
    <interactant intactId="EBI-1047359">
        <id>Q13283</id>
    </interactant>
    <interactant intactId="EBI-466029">
        <id>P42858</id>
        <label>HTT</label>
    </interactant>
    <organismsDiffer>false</organismsDiffer>
    <experiments>16</experiments>
</comment>
<comment type="interaction">
    <interactant intactId="EBI-1047359">
        <id>Q13283</id>
    </interactant>
    <interactant intactId="EBI-2862434">
        <id>Q96L73</id>
        <label>NSD1</label>
    </interactant>
    <organismsDiffer>false</organismsDiffer>
    <experiments>2</experiments>
</comment>
<comment type="interaction">
    <interactant intactId="EBI-1047359">
        <id>Q13283</id>
    </interactant>
    <interactant intactId="EBI-1567928">
        <id>Q8N122</id>
        <label>RPTOR</label>
    </interactant>
    <organismsDiffer>false</organismsDiffer>
    <experiments>4</experiments>
</comment>
<comment type="interaction">
    <interactant intactId="EBI-1047359">
        <id>Q13283</id>
    </interactant>
    <interactant intactId="EBI-1044112">
        <id>Q7KZF4</id>
        <label>SND1</label>
    </interactant>
    <organismsDiffer>false</organismsDiffer>
    <experiments>3</experiments>
</comment>
<comment type="interaction">
    <interactant intactId="EBI-1047359">
        <id>Q13283</id>
    </interactant>
    <interactant intactId="EBI-2341129">
        <id>Q14258</id>
        <label>TRIM25</label>
    </interactant>
    <organismsDiffer>false</organismsDiffer>
    <experiments>2</experiments>
</comment>
<comment type="interaction">
    <interactant intactId="EBI-1047359">
        <id>Q13283</id>
    </interactant>
    <interactant intactId="EBI-347762">
        <id>Q14157</id>
        <label>UBAP2L</label>
    </interactant>
    <organismsDiffer>false</organismsDiffer>
    <experiments>3</experiments>
</comment>
<comment type="interaction">
    <interactant intactId="EBI-1047359">
        <id>Q13283</id>
    </interactant>
    <interactant intactId="EBI-2510389">
        <id>Q14694</id>
        <label>USP10</label>
    </interactant>
    <organismsDiffer>false</organismsDiffer>
    <experiments>16</experiments>
</comment>
<comment type="interaction">
    <interactant intactId="EBI-1047359">
        <id>Q13283</id>
    </interactant>
    <interactant intactId="EBI-25592177">
        <id>K9N4V7</id>
        <label>N</label>
    </interactant>
    <organismsDiffer>true</organismsDiffer>
    <experiments>5</experiments>
</comment>
<comment type="interaction">
    <interactant intactId="EBI-1047359">
        <id>Q13283</id>
    </interactant>
    <interactant intactId="EBI-25475856">
        <id>P0DTC9</id>
        <label>N</label>
    </interactant>
    <organismsDiffer>true</organismsDiffer>
    <experiments>71</experiments>
</comment>
<comment type="interaction">
    <interactant intactId="EBI-1047359">
        <id>Q13283</id>
    </interactant>
    <interactant intactId="EBI-7602718">
        <id>P59595</id>
        <label>N</label>
    </interactant>
    <organismsDiffer>true</organismsDiffer>
    <experiments>12</experiments>
</comment>
<comment type="interaction">
    <interactant intactId="EBI-1047359">
        <id>Q13283</id>
    </interactant>
    <interactant intactId="EBI-25475864">
        <id>PRO_0000449623</id>
        <label>rep</label>
        <dbReference type="UniProtKB" id="P0DTD1"/>
    </interactant>
    <organismsDiffer>true</organismsDiffer>
    <experiments>5</experiments>
</comment>
<comment type="interaction">
    <interactant intactId="EBI-1047359">
        <id>Q13283</id>
    </interactant>
    <interactant intactId="EBI-30810942">
        <id>Q809B7</id>
    </interactant>
    <organismsDiffer>true</organismsDiffer>
    <experiments>2</experiments>
</comment>
<comment type="subcellular location">
    <subcellularLocation>
        <location evidence="10 25">Cytoplasm</location>
        <location evidence="10 25">Cytosol</location>
    </subcellularLocation>
    <subcellularLocation>
        <location evidence="1">Perikaryon</location>
    </subcellularLocation>
    <subcellularLocation>
        <location evidence="7 8 10 15 19 24 28 29 30">Cytoplasm</location>
        <location evidence="7 8 10 15 19 24 28 29 30">Stress granule</location>
    </subcellularLocation>
    <subcellularLocation>
        <location evidence="6">Nucleus</location>
    </subcellularLocation>
    <text evidence="6 7 10">Cytoplasmic in proliferating cells (PubMed:11604510). Cytosolic and partially nuclear in resting cells (PubMed:11604510). Recruited to stress granules in response to arsenite treatment (PubMed:12642610, PubMed:20180778). The unphosphorylated form is recruited to stress granules (PubMed:12642610). HRAS signaling contributes to this process by regulating G3BP dephosphorylation (PubMed:12642610).</text>
</comment>
<comment type="alternative products">
    <event type="alternative splicing"/>
    <isoform>
        <id>Q13283-1</id>
        <name>1</name>
        <sequence type="displayed"/>
    </isoform>
    <isoform>
        <id>Q13283-2</id>
        <name>2</name>
        <sequence type="described" ref="VSP_056280 VSP_056281"/>
    </isoform>
</comment>
<comment type="tissue specificity">
    <text evidence="39">Ubiquitous.</text>
</comment>
<comment type="domain">
    <text evidence="28 29 30">Can mediate both protein-protein and protein-RNA interactions via the NTF2 domain and RNA-binding domain RRM; protein-protein and protein-RNA interactions are essential for undergoing liquid-liquid phase separation (LLPS).</text>
</comment>
<comment type="domain">
    <text evidence="28 30">The acidic disordered region acts as a negative regulator of phase separation.</text>
</comment>
<comment type="domain">
    <text evidence="28 29">The NTF2 domain mediates interaction with CAPRIN1 and USP10 regulators, thereby regulating assembly of stress granules.</text>
</comment>
<comment type="PTM">
    <text evidence="6 7 29 30">Phosphorylation of the acidic disordered region regulates stress granule assembly (PubMed:32302571, PubMed:32302572). RASA1-dependent phosphorylation of Ser-149 induces a conformational change that prevents self-association (PubMed:11604510, PubMed:12642610). Dephosphorylation after HRAS activation is required for stress granule assembly (PubMed:11604510, PubMed:12642610). Ser-149 phosphorylation induces partial nuclear localization (PubMed:11604510).</text>
</comment>
<comment type="PTM">
    <text evidence="31 36">Ubiquitinated by TRIM21 via 'Lys-63'-linked polyubiquitination in the NTF2 domain in response to heat shock, leading to stress granule disassembly: ubiquitination promotes interaction with the FAF2 adapter, followed by interaction with VCP, which extracts G3BP1 from stress granules, leading to stress granule disassembly (PubMed:34739333, PubMed:36692217). In case of prolonged stress, ubiquitination by TRIM21 leads to autophagy-dependent degradation of G3BP1 via recruitment of ubiquitinated G3BP1 by SQSTM1 and/or CALCOCO2 to autophagosomes (PubMed:34739333, PubMed:36692217).</text>
</comment>
<comment type="PTM">
    <text evidence="23 24">(Microbial infection) Cleaved by human enterovirus 71; this cleavage induces the disassembly of cytoplasmic stress granules (PubMed:30006004). Cleaved by Foot-and-mouth disease virus; this cleavage suppresses the formation of cytoplasmic stress granules (PubMed:30404792).</text>
</comment>
<comment type="PTM">
    <text>Arg-435 is dimethylated, probably to asymmetric dimethylarginine.</text>
</comment>
<comment type="PTM">
    <text evidence="14">(Microbial infection) Cleaved by Encephalomyocarditis virus protease 3C; this cleavage suppresses the formation of cytoplasmic stress granules.</text>
</comment>
<dbReference type="EC" id="3.6.4.12" evidence="40"/>
<dbReference type="EC" id="3.6.4.13" evidence="40"/>
<dbReference type="EMBL" id="U32519">
    <property type="protein sequence ID" value="AAB07787.1"/>
    <property type="molecule type" value="mRNA"/>
</dbReference>
<dbReference type="EMBL" id="AK300098">
    <property type="protein sequence ID" value="BAG61899.1"/>
    <property type="molecule type" value="mRNA"/>
</dbReference>
<dbReference type="EMBL" id="BX647869">
    <property type="protein sequence ID" value="CAI46065.1"/>
    <property type="molecule type" value="mRNA"/>
</dbReference>
<dbReference type="EMBL" id="AC091982">
    <property type="status" value="NOT_ANNOTATED_CDS"/>
    <property type="molecule type" value="Genomic_DNA"/>
</dbReference>
<dbReference type="EMBL" id="BC006997">
    <property type="protein sequence ID" value="AAH06997.1"/>
    <property type="molecule type" value="mRNA"/>
</dbReference>
<dbReference type="CCDS" id="CCDS4319.1">
    <molecule id="Q13283-1"/>
</dbReference>
<dbReference type="RefSeq" id="NP_005745.1">
    <molecule id="Q13283-1"/>
    <property type="nucleotide sequence ID" value="NM_005754.3"/>
</dbReference>
<dbReference type="RefSeq" id="NP_938405.1">
    <molecule id="Q13283-1"/>
    <property type="nucleotide sequence ID" value="NM_198395.2"/>
</dbReference>
<dbReference type="RefSeq" id="XP_006714812.1">
    <property type="nucleotide sequence ID" value="XM_006714749.3"/>
</dbReference>
<dbReference type="RefSeq" id="XP_006714813.1">
    <property type="nucleotide sequence ID" value="XM_006714750.3"/>
</dbReference>
<dbReference type="RefSeq" id="XP_016864411.1">
    <property type="nucleotide sequence ID" value="XM_017008922.1"/>
</dbReference>
<dbReference type="RefSeq" id="XP_016864412.1">
    <property type="nucleotide sequence ID" value="XM_017008923.1"/>
</dbReference>
<dbReference type="PDB" id="3Q90">
    <property type="method" value="X-ray"/>
    <property type="resolution" value="1.70 A"/>
    <property type="chains" value="A/B=1-139"/>
</dbReference>
<dbReference type="PDB" id="4FCJ">
    <property type="method" value="X-ray"/>
    <property type="resolution" value="1.62 A"/>
    <property type="chains" value="A/B=1-139"/>
</dbReference>
<dbReference type="PDB" id="4FCM">
    <property type="method" value="X-ray"/>
    <property type="resolution" value="2.69 A"/>
    <property type="chains" value="A/B=1-139"/>
</dbReference>
<dbReference type="PDB" id="4IIA">
    <property type="method" value="X-ray"/>
    <property type="resolution" value="3.30 A"/>
    <property type="chains" value="A=11-139"/>
</dbReference>
<dbReference type="PDB" id="5FW5">
    <property type="method" value="X-ray"/>
    <property type="resolution" value="1.92 A"/>
    <property type="chains" value="A/B=1-139"/>
</dbReference>
<dbReference type="PDB" id="6TA7">
    <property type="method" value="X-ray"/>
    <property type="resolution" value="1.93 A"/>
    <property type="chains" value="A/B/C/D/E/F=1-139"/>
</dbReference>
<dbReference type="PDB" id="7S17">
    <property type="method" value="X-ray"/>
    <property type="resolution" value="2.36 A"/>
    <property type="chains" value="A/B=1-138"/>
</dbReference>
<dbReference type="PDB" id="7SUO">
    <property type="method" value="X-ray"/>
    <property type="resolution" value="2.35 A"/>
    <property type="chains" value="A/B=2-139"/>
</dbReference>
<dbReference type="PDB" id="7XHF">
    <property type="method" value="X-ray"/>
    <property type="resolution" value="2.68 A"/>
    <property type="chains" value="A/B=1-139"/>
</dbReference>
<dbReference type="PDB" id="7XHG">
    <property type="method" value="X-ray"/>
    <property type="resolution" value="2.46 A"/>
    <property type="chains" value="A/B/C/D=1-139"/>
</dbReference>
<dbReference type="PDB" id="8TH1">
    <property type="method" value="X-ray"/>
    <property type="resolution" value="1.80 A"/>
    <property type="chains" value="A/B/C/D=1-139"/>
</dbReference>
<dbReference type="PDB" id="8TH5">
    <property type="method" value="X-ray"/>
    <property type="resolution" value="2.62 A"/>
    <property type="chains" value="A/B/C/D/E/F/G/H/I/J=1-139"/>
</dbReference>
<dbReference type="PDB" id="8TH6">
    <property type="method" value="X-ray"/>
    <property type="resolution" value="2.34 A"/>
    <property type="chains" value="A/B/C/D=1-139"/>
</dbReference>
<dbReference type="PDB" id="8TH7">
    <property type="method" value="X-ray"/>
    <property type="resolution" value="2.88 A"/>
    <property type="chains" value="A/B=1-139"/>
</dbReference>
<dbReference type="PDB" id="8V1L">
    <property type="method" value="X-ray"/>
    <property type="resolution" value="2.68 A"/>
    <property type="chains" value="A/B/C/D/E/F=1-139"/>
</dbReference>
<dbReference type="PDBsum" id="3Q90"/>
<dbReference type="PDBsum" id="4FCJ"/>
<dbReference type="PDBsum" id="4FCM"/>
<dbReference type="PDBsum" id="4IIA"/>
<dbReference type="PDBsum" id="5FW5"/>
<dbReference type="PDBsum" id="6TA7"/>
<dbReference type="PDBsum" id="7S17"/>
<dbReference type="PDBsum" id="7SUO"/>
<dbReference type="PDBsum" id="7XHF"/>
<dbReference type="PDBsum" id="7XHG"/>
<dbReference type="PDBsum" id="8TH1"/>
<dbReference type="PDBsum" id="8TH5"/>
<dbReference type="PDBsum" id="8TH6"/>
<dbReference type="PDBsum" id="8TH7"/>
<dbReference type="PDBsum" id="8V1L"/>
<dbReference type="SMR" id="Q13283"/>
<dbReference type="BioGRID" id="115448">
    <property type="interactions" value="850"/>
</dbReference>
<dbReference type="CORUM" id="Q13283"/>
<dbReference type="ELM" id="Q13283"/>
<dbReference type="FunCoup" id="Q13283">
    <property type="interactions" value="3092"/>
</dbReference>
<dbReference type="IntAct" id="Q13283">
    <property type="interactions" value="395"/>
</dbReference>
<dbReference type="MINT" id="Q13283"/>
<dbReference type="STRING" id="9606.ENSP00000377681"/>
<dbReference type="GlyCosmos" id="Q13283">
    <property type="glycosylation" value="3 sites, 1 glycan"/>
</dbReference>
<dbReference type="GlyGen" id="Q13283">
    <property type="glycosylation" value="6 sites, 1 O-linked glycan (6 sites)"/>
</dbReference>
<dbReference type="iPTMnet" id="Q13283"/>
<dbReference type="MetOSite" id="Q13283"/>
<dbReference type="PhosphoSitePlus" id="Q13283"/>
<dbReference type="SwissPalm" id="Q13283"/>
<dbReference type="BioMuta" id="G3BP1"/>
<dbReference type="DMDM" id="14916572"/>
<dbReference type="CPTAC" id="CPTAC-374"/>
<dbReference type="jPOST" id="Q13283"/>
<dbReference type="MassIVE" id="Q13283"/>
<dbReference type="PaxDb" id="9606-ENSP00000377681"/>
<dbReference type="PeptideAtlas" id="Q13283"/>
<dbReference type="ProteomicsDB" id="59275">
    <molecule id="Q13283-1"/>
</dbReference>
<dbReference type="ProteomicsDB" id="62931"/>
<dbReference type="Pumba" id="Q13283"/>
<dbReference type="Antibodypedia" id="1315">
    <property type="antibodies" value="574 antibodies from 37 providers"/>
</dbReference>
<dbReference type="DNASU" id="10146"/>
<dbReference type="Ensembl" id="ENST00000356245.8">
    <molecule id="Q13283-1"/>
    <property type="protein sequence ID" value="ENSP00000348578.3"/>
    <property type="gene ID" value="ENSG00000145907.16"/>
</dbReference>
<dbReference type="Ensembl" id="ENST00000394123.7">
    <molecule id="Q13283-1"/>
    <property type="protein sequence ID" value="ENSP00000377681.3"/>
    <property type="gene ID" value="ENSG00000145907.16"/>
</dbReference>
<dbReference type="Ensembl" id="ENST00000522367.6">
    <molecule id="Q13283-2"/>
    <property type="protein sequence ID" value="ENSP00000428926.1"/>
    <property type="gene ID" value="ENSG00000145907.16"/>
</dbReference>
<dbReference type="Ensembl" id="ENST00000522761.6">
    <molecule id="Q13283-1"/>
    <property type="protein sequence ID" value="ENSP00000430480.2"/>
    <property type="gene ID" value="ENSG00000145907.16"/>
</dbReference>
<dbReference type="Ensembl" id="ENST00000676827.1">
    <molecule id="Q13283-1"/>
    <property type="protein sequence ID" value="ENSP00000504627.1"/>
    <property type="gene ID" value="ENSG00000145907.16"/>
</dbReference>
<dbReference type="Ensembl" id="ENST00000676978.1">
    <molecule id="Q13283-1"/>
    <property type="protein sequence ID" value="ENSP00000503939.1"/>
    <property type="gene ID" value="ENSG00000145907.16"/>
</dbReference>
<dbReference type="Ensembl" id="ENST00000677323.1">
    <molecule id="Q13283-1"/>
    <property type="protein sequence ID" value="ENSP00000502880.1"/>
    <property type="gene ID" value="ENSG00000145907.16"/>
</dbReference>
<dbReference type="Ensembl" id="ENST00000677381.1">
    <molecule id="Q13283-2"/>
    <property type="protein sequence ID" value="ENSP00000504403.1"/>
    <property type="gene ID" value="ENSG00000145907.16"/>
</dbReference>
<dbReference type="Ensembl" id="ENST00000678070.1">
    <molecule id="Q13283-1"/>
    <property type="protein sequence ID" value="ENSP00000503039.1"/>
    <property type="gene ID" value="ENSG00000145907.16"/>
</dbReference>
<dbReference type="Ensembl" id="ENST00000678101.1">
    <molecule id="Q13283-1"/>
    <property type="protein sequence ID" value="ENSP00000504140.1"/>
    <property type="gene ID" value="ENSG00000145907.16"/>
</dbReference>
<dbReference type="Ensembl" id="ENST00000678925.1">
    <molecule id="Q13283-1"/>
    <property type="protein sequence ID" value="ENSP00000503699.1"/>
    <property type="gene ID" value="ENSG00000145907.16"/>
</dbReference>
<dbReference type="GeneID" id="10146"/>
<dbReference type="KEGG" id="hsa:10146"/>
<dbReference type="MANE-Select" id="ENST00000356245.8">
    <property type="protein sequence ID" value="ENSP00000348578.3"/>
    <property type="RefSeq nucleotide sequence ID" value="NM_005754.3"/>
    <property type="RefSeq protein sequence ID" value="NP_005745.1"/>
</dbReference>
<dbReference type="UCSC" id="uc063iwq.1">
    <molecule id="Q13283-1"/>
    <property type="organism name" value="human"/>
</dbReference>
<dbReference type="AGR" id="HGNC:30292"/>
<dbReference type="CTD" id="10146"/>
<dbReference type="DisGeNET" id="10146"/>
<dbReference type="GeneCards" id="G3BP1"/>
<dbReference type="HGNC" id="HGNC:30292">
    <property type="gene designation" value="G3BP1"/>
</dbReference>
<dbReference type="HPA" id="ENSG00000145907">
    <property type="expression patterns" value="Low tissue specificity"/>
</dbReference>
<dbReference type="MIM" id="608431">
    <property type="type" value="gene"/>
</dbReference>
<dbReference type="neXtProt" id="NX_Q13283"/>
<dbReference type="OpenTargets" id="ENSG00000145907"/>
<dbReference type="PharmGKB" id="PA162389105"/>
<dbReference type="VEuPathDB" id="HostDB:ENSG00000145907"/>
<dbReference type="eggNOG" id="KOG0116">
    <property type="taxonomic scope" value="Eukaryota"/>
</dbReference>
<dbReference type="GeneTree" id="ENSGT00390000011365"/>
<dbReference type="HOGENOM" id="CLU_022209_0_2_1"/>
<dbReference type="InParanoid" id="Q13283"/>
<dbReference type="OMA" id="HQSPQMV"/>
<dbReference type="OrthoDB" id="339151at2759"/>
<dbReference type="PAN-GO" id="Q13283">
    <property type="GO annotations" value="3 GO annotations based on evolutionary models"/>
</dbReference>
<dbReference type="PhylomeDB" id="Q13283"/>
<dbReference type="TreeFam" id="TF325464"/>
<dbReference type="PathwayCommons" id="Q13283"/>
<dbReference type="Reactome" id="R-HSA-9705671">
    <property type="pathway name" value="SARS-CoV-2 activates/modulates innate and adaptive immune responses"/>
</dbReference>
<dbReference type="SignaLink" id="Q13283"/>
<dbReference type="SIGNOR" id="Q13283"/>
<dbReference type="BioGRID-ORCS" id="10146">
    <property type="hits" value="45 hits in 1161 CRISPR screens"/>
</dbReference>
<dbReference type="CD-CODE" id="232F8A39">
    <property type="entry name" value="P-body"/>
</dbReference>
<dbReference type="CD-CODE" id="ACEBA0C0">
    <property type="entry name" value="SARS-CoV-2 condensate"/>
</dbReference>
<dbReference type="CD-CODE" id="D8E9712B">
    <property type="entry name" value="Neuronal RNP granule"/>
</dbReference>
<dbReference type="CD-CODE" id="DEE660B4">
    <property type="entry name" value="Stress granule"/>
</dbReference>
<dbReference type="CD-CODE" id="E1879998">
    <property type="entry name" value="Synthetic Condensate 000375"/>
</dbReference>
<dbReference type="ChiTaRS" id="G3BP1">
    <property type="organism name" value="human"/>
</dbReference>
<dbReference type="EvolutionaryTrace" id="Q13283"/>
<dbReference type="GeneWiki" id="G3BP1"/>
<dbReference type="GenomeRNAi" id="10146"/>
<dbReference type="Pharos" id="Q13283">
    <property type="development level" value="Tbio"/>
</dbReference>
<dbReference type="PRO" id="PR:Q13283"/>
<dbReference type="Proteomes" id="UP000005640">
    <property type="component" value="Chromosome 5"/>
</dbReference>
<dbReference type="RNAct" id="Q13283">
    <property type="molecule type" value="protein"/>
</dbReference>
<dbReference type="Bgee" id="ENSG00000145907">
    <property type="expression patterns" value="Expressed in ventricular zone and 209 other cell types or tissues"/>
</dbReference>
<dbReference type="ExpressionAtlas" id="Q13283">
    <property type="expression patterns" value="baseline and differential"/>
</dbReference>
<dbReference type="GO" id="GO:0005737">
    <property type="term" value="C:cytoplasm"/>
    <property type="evidence" value="ECO:0000314"/>
    <property type="project" value="UniProtKB"/>
</dbReference>
<dbReference type="GO" id="GO:0010494">
    <property type="term" value="C:cytoplasmic stress granule"/>
    <property type="evidence" value="ECO:0000314"/>
    <property type="project" value="UniProtKB"/>
</dbReference>
<dbReference type="GO" id="GO:0005829">
    <property type="term" value="C:cytosol"/>
    <property type="evidence" value="ECO:0000314"/>
    <property type="project" value="HPA"/>
</dbReference>
<dbReference type="GO" id="GO:0005925">
    <property type="term" value="C:focal adhesion"/>
    <property type="evidence" value="ECO:0007005"/>
    <property type="project" value="UniProtKB"/>
</dbReference>
<dbReference type="GO" id="GO:0005634">
    <property type="term" value="C:nucleus"/>
    <property type="evidence" value="ECO:0000304"/>
    <property type="project" value="ProtInc"/>
</dbReference>
<dbReference type="GO" id="GO:0043204">
    <property type="term" value="C:perikaryon"/>
    <property type="evidence" value="ECO:0007669"/>
    <property type="project" value="UniProtKB-SubCell"/>
</dbReference>
<dbReference type="GO" id="GO:0005524">
    <property type="term" value="F:ATP binding"/>
    <property type="evidence" value="ECO:0007669"/>
    <property type="project" value="UniProtKB-KW"/>
</dbReference>
<dbReference type="GO" id="GO:0016887">
    <property type="term" value="F:ATP hydrolysis activity"/>
    <property type="evidence" value="ECO:0007669"/>
    <property type="project" value="RHEA"/>
</dbReference>
<dbReference type="GO" id="GO:0003677">
    <property type="term" value="F:DNA binding"/>
    <property type="evidence" value="ECO:0007669"/>
    <property type="project" value="UniProtKB-KW"/>
</dbReference>
<dbReference type="GO" id="GO:0003678">
    <property type="term" value="F:DNA helicase activity"/>
    <property type="evidence" value="ECO:0000314"/>
    <property type="project" value="FlyBase"/>
</dbReference>
<dbReference type="GO" id="GO:0033677">
    <property type="term" value="F:DNA/RNA helicase activity"/>
    <property type="evidence" value="ECO:0000314"/>
    <property type="project" value="FlyBase"/>
</dbReference>
<dbReference type="GO" id="GO:0004519">
    <property type="term" value="F:endonuclease activity"/>
    <property type="evidence" value="ECO:0007669"/>
    <property type="project" value="UniProtKB-KW"/>
</dbReference>
<dbReference type="GO" id="GO:0140693">
    <property type="term" value="F:molecular condensate scaffold activity"/>
    <property type="evidence" value="ECO:0000314"/>
    <property type="project" value="UniProtKB"/>
</dbReference>
<dbReference type="GO" id="GO:0003729">
    <property type="term" value="F:mRNA binding"/>
    <property type="evidence" value="ECO:0000318"/>
    <property type="project" value="GO_Central"/>
</dbReference>
<dbReference type="GO" id="GO:0043024">
    <property type="term" value="F:ribosomal small subunit binding"/>
    <property type="evidence" value="ECO:0000314"/>
    <property type="project" value="UniProtKB"/>
</dbReference>
<dbReference type="GO" id="GO:0003723">
    <property type="term" value="F:RNA binding"/>
    <property type="evidence" value="ECO:0007005"/>
    <property type="project" value="UniProtKB"/>
</dbReference>
<dbReference type="GO" id="GO:0003724">
    <property type="term" value="F:RNA helicase activity"/>
    <property type="evidence" value="ECO:0000314"/>
    <property type="project" value="FlyBase"/>
</dbReference>
<dbReference type="GO" id="GO:0051607">
    <property type="term" value="P:defense response to virus"/>
    <property type="evidence" value="ECO:0000315"/>
    <property type="project" value="UniProtKB"/>
</dbReference>
<dbReference type="GO" id="GO:0045087">
    <property type="term" value="P:innate immune response"/>
    <property type="evidence" value="ECO:0007669"/>
    <property type="project" value="UniProtKB-KW"/>
</dbReference>
<dbReference type="GO" id="GO:0090090">
    <property type="term" value="P:negative regulation of canonical Wnt signaling pathway"/>
    <property type="evidence" value="ECO:0007669"/>
    <property type="project" value="Ensembl"/>
</dbReference>
<dbReference type="GO" id="GO:0032481">
    <property type="term" value="P:positive regulation of type I interferon production"/>
    <property type="evidence" value="ECO:0000314"/>
    <property type="project" value="UniProtKB"/>
</dbReference>
<dbReference type="GO" id="GO:0007265">
    <property type="term" value="P:Ras protein signal transduction"/>
    <property type="evidence" value="ECO:0000304"/>
    <property type="project" value="ProtInc"/>
</dbReference>
<dbReference type="GO" id="GO:0034063">
    <property type="term" value="P:stress granule assembly"/>
    <property type="evidence" value="ECO:0000314"/>
    <property type="project" value="UniProtKB"/>
</dbReference>
<dbReference type="CDD" id="cd00780">
    <property type="entry name" value="NTF2"/>
    <property type="match status" value="1"/>
</dbReference>
<dbReference type="CDD" id="cd12463">
    <property type="entry name" value="RRM_G3BP1"/>
    <property type="match status" value="1"/>
</dbReference>
<dbReference type="FunFam" id="3.30.70.330:FF:000266">
    <property type="entry name" value="Ras GTPase-activating protein-binding protein 1"/>
    <property type="match status" value="1"/>
</dbReference>
<dbReference type="FunFam" id="3.10.450.50:FF:000002">
    <property type="entry name" value="Ras GTPase-activating protein-binding protein 2 isoform 1"/>
    <property type="match status" value="1"/>
</dbReference>
<dbReference type="Gene3D" id="3.10.450.50">
    <property type="match status" value="1"/>
</dbReference>
<dbReference type="Gene3D" id="3.30.70.330">
    <property type="match status" value="1"/>
</dbReference>
<dbReference type="InterPro" id="IPR034374">
    <property type="entry name" value="G3BP1_RRM"/>
</dbReference>
<dbReference type="InterPro" id="IPR032710">
    <property type="entry name" value="NTF2-like_dom_sf"/>
</dbReference>
<dbReference type="InterPro" id="IPR002075">
    <property type="entry name" value="NTF2_dom"/>
</dbReference>
<dbReference type="InterPro" id="IPR018222">
    <property type="entry name" value="Nuclear_transport_factor_2_euk"/>
</dbReference>
<dbReference type="InterPro" id="IPR012677">
    <property type="entry name" value="Nucleotide-bd_a/b_plait_sf"/>
</dbReference>
<dbReference type="InterPro" id="IPR039539">
    <property type="entry name" value="Ras_GTPase_bind_prot"/>
</dbReference>
<dbReference type="InterPro" id="IPR035979">
    <property type="entry name" value="RBD_domain_sf"/>
</dbReference>
<dbReference type="InterPro" id="IPR000504">
    <property type="entry name" value="RRM_dom"/>
</dbReference>
<dbReference type="PANTHER" id="PTHR10693">
    <property type="entry name" value="RAS GTPASE-ACTIVATING PROTEIN-BINDING PROTEIN"/>
    <property type="match status" value="1"/>
</dbReference>
<dbReference type="PANTHER" id="PTHR10693:SF21">
    <property type="entry name" value="RAS GTPASE-ACTIVATING PROTEIN-BINDING PROTEIN 1"/>
    <property type="match status" value="1"/>
</dbReference>
<dbReference type="Pfam" id="PF02136">
    <property type="entry name" value="NTF2"/>
    <property type="match status" value="1"/>
</dbReference>
<dbReference type="Pfam" id="PF00076">
    <property type="entry name" value="RRM_1"/>
    <property type="match status" value="1"/>
</dbReference>
<dbReference type="SMART" id="SM00360">
    <property type="entry name" value="RRM"/>
    <property type="match status" value="1"/>
</dbReference>
<dbReference type="SUPFAM" id="SSF54427">
    <property type="entry name" value="NTF2-like"/>
    <property type="match status" value="1"/>
</dbReference>
<dbReference type="SUPFAM" id="SSF54928">
    <property type="entry name" value="RNA-binding domain, RBD"/>
    <property type="match status" value="1"/>
</dbReference>
<dbReference type="PROSITE" id="PS50177">
    <property type="entry name" value="NTF2_DOMAIN"/>
    <property type="match status" value="1"/>
</dbReference>
<dbReference type="PROSITE" id="PS50102">
    <property type="entry name" value="RRM"/>
    <property type="match status" value="1"/>
</dbReference>
<proteinExistence type="evidence at protein level"/>
<keyword id="KW-0002">3D-structure</keyword>
<keyword id="KW-0007">Acetylation</keyword>
<keyword id="KW-0025">Alternative splicing</keyword>
<keyword id="KW-0067">ATP-binding</keyword>
<keyword id="KW-0963">Cytoplasm</keyword>
<keyword id="KW-0903">Direct protein sequencing</keyword>
<keyword id="KW-0238">DNA-binding</keyword>
<keyword id="KW-0255">Endonuclease</keyword>
<keyword id="KW-0347">Helicase</keyword>
<keyword id="KW-0945">Host-virus interaction</keyword>
<keyword id="KW-0378">Hydrolase</keyword>
<keyword id="KW-0391">Immunity</keyword>
<keyword id="KW-0399">Innate immunity</keyword>
<keyword id="KW-1017">Isopeptide bond</keyword>
<keyword id="KW-0488">Methylation</keyword>
<keyword id="KW-0540">Nuclease</keyword>
<keyword id="KW-0547">Nucleotide-binding</keyword>
<keyword id="KW-0539">Nucleus</keyword>
<keyword id="KW-0597">Phosphoprotein</keyword>
<keyword id="KW-1267">Proteomics identification</keyword>
<keyword id="KW-1185">Reference proteome</keyword>
<keyword id="KW-0694">RNA-binding</keyword>
<keyword id="KW-0813">Transport</keyword>
<keyword id="KW-0832">Ubl conjugation</keyword>
<accession>Q13283</accession>
<accession>Q5HYE9</accession>
<protein>
    <recommendedName>
        <fullName>Ras GTPase-activating protein-binding protein 1</fullName>
        <shortName>G3BP-1</shortName>
        <ecNumber evidence="40">3.6.4.12</ecNumber>
        <ecNumber evidence="40">3.6.4.13</ecNumber>
    </recommendedName>
    <alternativeName>
        <fullName>ATP-dependent DNA helicase VIII</fullName>
        <shortName>hDH VIII</shortName>
    </alternativeName>
    <alternativeName>
        <fullName>GAP SH3 domain-binding protein 1</fullName>
    </alternativeName>
</protein>
<organism>
    <name type="scientific">Homo sapiens</name>
    <name type="common">Human</name>
    <dbReference type="NCBI Taxonomy" id="9606"/>
    <lineage>
        <taxon>Eukaryota</taxon>
        <taxon>Metazoa</taxon>
        <taxon>Chordata</taxon>
        <taxon>Craniata</taxon>
        <taxon>Vertebrata</taxon>
        <taxon>Euteleostomi</taxon>
        <taxon>Mammalia</taxon>
        <taxon>Eutheria</taxon>
        <taxon>Euarchontoglires</taxon>
        <taxon>Primates</taxon>
        <taxon>Haplorrhini</taxon>
        <taxon>Catarrhini</taxon>
        <taxon>Hominidae</taxon>
        <taxon>Homo</taxon>
    </lineage>
</organism>
<sequence length="466" mass="52164">MVMEKPSPLLVGREFVRQYYTLLNQAPDMLHRFYGKNSSYVHGGLDSNGKPADAVYGQKEIHRKVMSQNFTNCHTKIRHVDAHATLNDGVVVQVMGLLSNNNQALRRFMQTFVLAPEGSVANKFYVHNDIFRYQDEVFGGFVTEPQEESEEEVEEPEERQQTPEVVPDDSGTFYDQAVVSNDMEEHLEEPVAEPEPDPEPEPEQEPVSEIQEEKPEPVLEETAPEDAQKSSSPAPADIAQTVQEDLRTFSWASVTSKNLPPSGAVPVTGIPPHVVKVPASQPRPESKPESQIPPQRPQRDQRVREQRINIPPQRGPRPIREAGEQGDIEPRRMVRHPDSHQLFIGNLPHEVDKSELKDFFQSYGNVVELRINSGGKLPNFGFVVFDDSEPVQKVLSNRPIMFRGEVRLNVEEKKTRAAREGDRRDNRLRGPGGPRGGLGGGMRGPPRGGMVQKPGFGVGRGLAPRQ</sequence>
<gene>
    <name evidence="44 46" type="primary">G3BP1</name>
    <name type="synonym">G3BP</name>
</gene>
<evidence type="ECO:0000250" key="1">
    <source>
        <dbReference type="UniProtKB" id="P97855"/>
    </source>
</evidence>
<evidence type="ECO:0000255" key="2">
    <source>
        <dbReference type="PROSITE-ProRule" id="PRU00137"/>
    </source>
</evidence>
<evidence type="ECO:0000255" key="3">
    <source>
        <dbReference type="PROSITE-ProRule" id="PRU00176"/>
    </source>
</evidence>
<evidence type="ECO:0000256" key="4">
    <source>
        <dbReference type="SAM" id="MobiDB-lite"/>
    </source>
</evidence>
<evidence type="ECO:0000269" key="5">
    <source>
    </source>
</evidence>
<evidence type="ECO:0000269" key="6">
    <source>
    </source>
</evidence>
<evidence type="ECO:0000269" key="7">
    <source>
    </source>
</evidence>
<evidence type="ECO:0000269" key="8">
    <source>
    </source>
</evidence>
<evidence type="ECO:0000269" key="9">
    <source>
    </source>
</evidence>
<evidence type="ECO:0000269" key="10">
    <source>
    </source>
</evidence>
<evidence type="ECO:0000269" key="11">
    <source>
    </source>
</evidence>
<evidence type="ECO:0000269" key="12">
    <source>
    </source>
</evidence>
<evidence type="ECO:0000269" key="13">
    <source>
    </source>
</evidence>
<evidence type="ECO:0000269" key="14">
    <source>
    </source>
</evidence>
<evidence type="ECO:0000269" key="15">
    <source>
    </source>
</evidence>
<evidence type="ECO:0000269" key="16">
    <source>
    </source>
</evidence>
<evidence type="ECO:0000269" key="17">
    <source>
    </source>
</evidence>
<evidence type="ECO:0000269" key="18">
    <source>
    </source>
</evidence>
<evidence type="ECO:0000269" key="19">
    <source>
    </source>
</evidence>
<evidence type="ECO:0000269" key="20">
    <source>
    </source>
</evidence>
<evidence type="ECO:0000269" key="21">
    <source>
    </source>
</evidence>
<evidence type="ECO:0000269" key="22">
    <source>
    </source>
</evidence>
<evidence type="ECO:0000269" key="23">
    <source>
    </source>
</evidence>
<evidence type="ECO:0000269" key="24">
    <source>
    </source>
</evidence>
<evidence type="ECO:0000269" key="25">
    <source>
    </source>
</evidence>
<evidence type="ECO:0000269" key="26">
    <source>
    </source>
</evidence>
<evidence type="ECO:0000269" key="27">
    <source>
    </source>
</evidence>
<evidence type="ECO:0000269" key="28">
    <source>
    </source>
</evidence>
<evidence type="ECO:0000269" key="29">
    <source>
    </source>
</evidence>
<evidence type="ECO:0000269" key="30">
    <source>
    </source>
</evidence>
<evidence type="ECO:0000269" key="31">
    <source>
    </source>
</evidence>
<evidence type="ECO:0000269" key="32">
    <source>
    </source>
</evidence>
<evidence type="ECO:0000269" key="33">
    <source>
    </source>
</evidence>
<evidence type="ECO:0000269" key="34">
    <source>
    </source>
</evidence>
<evidence type="ECO:0000269" key="35">
    <source>
    </source>
</evidence>
<evidence type="ECO:0000269" key="36">
    <source>
    </source>
</evidence>
<evidence type="ECO:0000269" key="37">
    <source>
    </source>
</evidence>
<evidence type="ECO:0000269" key="38">
    <source>
    </source>
</evidence>
<evidence type="ECO:0000269" key="39">
    <source>
    </source>
</evidence>
<evidence type="ECO:0000269" key="40">
    <source>
    </source>
</evidence>
<evidence type="ECO:0000269" key="41">
    <source ref="6"/>
</evidence>
<evidence type="ECO:0000303" key="42">
    <source>
    </source>
</evidence>
<evidence type="ECO:0000303" key="43">
    <source>
    </source>
</evidence>
<evidence type="ECO:0000303" key="44">
    <source>
    </source>
</evidence>
<evidence type="ECO:0000305" key="45">
    <source>
    </source>
</evidence>
<evidence type="ECO:0000312" key="46">
    <source>
        <dbReference type="HGNC" id="HGNC:30292"/>
    </source>
</evidence>
<evidence type="ECO:0007744" key="47">
    <source>
        <dbReference type="PDB" id="7S17"/>
    </source>
</evidence>
<evidence type="ECO:0007744" key="48">
    <source>
    </source>
</evidence>
<evidence type="ECO:0007744" key="49">
    <source>
    </source>
</evidence>
<evidence type="ECO:0007744" key="50">
    <source>
    </source>
</evidence>
<evidence type="ECO:0007744" key="51">
    <source>
    </source>
</evidence>
<evidence type="ECO:0007744" key="52">
    <source>
    </source>
</evidence>
<evidence type="ECO:0007744" key="53">
    <source>
    </source>
</evidence>
<evidence type="ECO:0007744" key="54">
    <source>
    </source>
</evidence>
<evidence type="ECO:0007744" key="55">
    <source>
    </source>
</evidence>
<evidence type="ECO:0007744" key="56">
    <source>
    </source>
</evidence>
<evidence type="ECO:0007744" key="57">
    <source>
    </source>
</evidence>
<evidence type="ECO:0007744" key="58">
    <source>
    </source>
</evidence>
<evidence type="ECO:0007744" key="59">
    <source>
    </source>
</evidence>
<evidence type="ECO:0007744" key="60">
    <source>
    </source>
</evidence>
<evidence type="ECO:0007744" key="61">
    <source>
    </source>
</evidence>
<evidence type="ECO:0007829" key="62">
    <source>
        <dbReference type="PDB" id="4FCJ"/>
    </source>
</evidence>
<evidence type="ECO:0007829" key="63">
    <source>
        <dbReference type="PDB" id="4IIA"/>
    </source>
</evidence>
<evidence type="ECO:0007829" key="64">
    <source>
        <dbReference type="PDB" id="8TH1"/>
    </source>
</evidence>
<reference key="1">
    <citation type="journal article" date="1996" name="Mol. Cell. Biol.">
        <title>A Ras-GTPase-activating protein SH3-domain-binding protein.</title>
        <authorList>
            <person name="Parker F."/>
            <person name="Maurier F."/>
            <person name="Delumeau I."/>
            <person name="Duchesne M."/>
            <person name="Faucher D."/>
            <person name="Debussche L."/>
            <person name="Dugue A."/>
            <person name="Schweighoffer F."/>
            <person name="Tocque B."/>
        </authorList>
    </citation>
    <scope>NUCLEOTIDE SEQUENCE [MRNA] (ISOFORM 1)</scope>
    <scope>TISSUE SPECIFICITY</scope>
    <source>
        <tissue>Placenta</tissue>
    </source>
</reference>
<reference key="2">
    <citation type="journal article" date="2004" name="Nat. Genet.">
        <title>Complete sequencing and characterization of 21,243 full-length human cDNAs.</title>
        <authorList>
            <person name="Ota T."/>
            <person name="Suzuki Y."/>
            <person name="Nishikawa T."/>
            <person name="Otsuki T."/>
            <person name="Sugiyama T."/>
            <person name="Irie R."/>
            <person name="Wakamatsu A."/>
            <person name="Hayashi K."/>
            <person name="Sato H."/>
            <person name="Nagai K."/>
            <person name="Kimura K."/>
            <person name="Makita H."/>
            <person name="Sekine M."/>
            <person name="Obayashi M."/>
            <person name="Nishi T."/>
            <person name="Shibahara T."/>
            <person name="Tanaka T."/>
            <person name="Ishii S."/>
            <person name="Yamamoto J."/>
            <person name="Saito K."/>
            <person name="Kawai Y."/>
            <person name="Isono Y."/>
            <person name="Nakamura Y."/>
            <person name="Nagahari K."/>
            <person name="Murakami K."/>
            <person name="Yasuda T."/>
            <person name="Iwayanagi T."/>
            <person name="Wagatsuma M."/>
            <person name="Shiratori A."/>
            <person name="Sudo H."/>
            <person name="Hosoiri T."/>
            <person name="Kaku Y."/>
            <person name="Kodaira H."/>
            <person name="Kondo H."/>
            <person name="Sugawara M."/>
            <person name="Takahashi M."/>
            <person name="Kanda K."/>
            <person name="Yokoi T."/>
            <person name="Furuya T."/>
            <person name="Kikkawa E."/>
            <person name="Omura Y."/>
            <person name="Abe K."/>
            <person name="Kamihara K."/>
            <person name="Katsuta N."/>
            <person name="Sato K."/>
            <person name="Tanikawa M."/>
            <person name="Yamazaki M."/>
            <person name="Ninomiya K."/>
            <person name="Ishibashi T."/>
            <person name="Yamashita H."/>
            <person name="Murakawa K."/>
            <person name="Fujimori K."/>
            <person name="Tanai H."/>
            <person name="Kimata M."/>
            <person name="Watanabe M."/>
            <person name="Hiraoka S."/>
            <person name="Chiba Y."/>
            <person name="Ishida S."/>
            <person name="Ono Y."/>
            <person name="Takiguchi S."/>
            <person name="Watanabe S."/>
            <person name="Yosida M."/>
            <person name="Hotuta T."/>
            <person name="Kusano J."/>
            <person name="Kanehori K."/>
            <person name="Takahashi-Fujii A."/>
            <person name="Hara H."/>
            <person name="Tanase T.-O."/>
            <person name="Nomura Y."/>
            <person name="Togiya S."/>
            <person name="Komai F."/>
            <person name="Hara R."/>
            <person name="Takeuchi K."/>
            <person name="Arita M."/>
            <person name="Imose N."/>
            <person name="Musashino K."/>
            <person name="Yuuki H."/>
            <person name="Oshima A."/>
            <person name="Sasaki N."/>
            <person name="Aotsuka S."/>
            <person name="Yoshikawa Y."/>
            <person name="Matsunawa H."/>
            <person name="Ichihara T."/>
            <person name="Shiohata N."/>
            <person name="Sano S."/>
            <person name="Moriya S."/>
            <person name="Momiyama H."/>
            <person name="Satoh N."/>
            <person name="Takami S."/>
            <person name="Terashima Y."/>
            <person name="Suzuki O."/>
            <person name="Nakagawa S."/>
            <person name="Senoh A."/>
            <person name="Mizoguchi H."/>
            <person name="Goto Y."/>
            <person name="Shimizu F."/>
            <person name="Wakebe H."/>
            <person name="Hishigaki H."/>
            <person name="Watanabe T."/>
            <person name="Sugiyama A."/>
            <person name="Takemoto M."/>
            <person name="Kawakami B."/>
            <person name="Yamazaki M."/>
            <person name="Watanabe K."/>
            <person name="Kumagai A."/>
            <person name="Itakura S."/>
            <person name="Fukuzumi Y."/>
            <person name="Fujimori Y."/>
            <person name="Komiyama M."/>
            <person name="Tashiro H."/>
            <person name="Tanigami A."/>
            <person name="Fujiwara T."/>
            <person name="Ono T."/>
            <person name="Yamada K."/>
            <person name="Fujii Y."/>
            <person name="Ozaki K."/>
            <person name="Hirao M."/>
            <person name="Ohmori Y."/>
            <person name="Kawabata A."/>
            <person name="Hikiji T."/>
            <person name="Kobatake N."/>
            <person name="Inagaki H."/>
            <person name="Ikema Y."/>
            <person name="Okamoto S."/>
            <person name="Okitani R."/>
            <person name="Kawakami T."/>
            <person name="Noguchi S."/>
            <person name="Itoh T."/>
            <person name="Shigeta K."/>
            <person name="Senba T."/>
            <person name="Matsumura K."/>
            <person name="Nakajima Y."/>
            <person name="Mizuno T."/>
            <person name="Morinaga M."/>
            <person name="Sasaki M."/>
            <person name="Togashi T."/>
            <person name="Oyama M."/>
            <person name="Hata H."/>
            <person name="Watanabe M."/>
            <person name="Komatsu T."/>
            <person name="Mizushima-Sugano J."/>
            <person name="Satoh T."/>
            <person name="Shirai Y."/>
            <person name="Takahashi Y."/>
            <person name="Nakagawa K."/>
            <person name="Okumura K."/>
            <person name="Nagase T."/>
            <person name="Nomura N."/>
            <person name="Kikuchi H."/>
            <person name="Masuho Y."/>
            <person name="Yamashita R."/>
            <person name="Nakai K."/>
            <person name="Yada T."/>
            <person name="Nakamura Y."/>
            <person name="Ohara O."/>
            <person name="Isogai T."/>
            <person name="Sugano S."/>
        </authorList>
    </citation>
    <scope>NUCLEOTIDE SEQUENCE [LARGE SCALE MRNA] (ISOFORM 2)</scope>
    <source>
        <tissue>Pericardium</tissue>
    </source>
</reference>
<reference key="3">
    <citation type="journal article" date="2007" name="BMC Genomics">
        <title>The full-ORF clone resource of the German cDNA consortium.</title>
        <authorList>
            <person name="Bechtel S."/>
            <person name="Rosenfelder H."/>
            <person name="Duda A."/>
            <person name="Schmidt C.P."/>
            <person name="Ernst U."/>
            <person name="Wellenreuther R."/>
            <person name="Mehrle A."/>
            <person name="Schuster C."/>
            <person name="Bahr A."/>
            <person name="Bloecker H."/>
            <person name="Heubner D."/>
            <person name="Hoerlein A."/>
            <person name="Michel G."/>
            <person name="Wedler H."/>
            <person name="Koehrer K."/>
            <person name="Ottenwaelder B."/>
            <person name="Poustka A."/>
            <person name="Wiemann S."/>
            <person name="Schupp I."/>
        </authorList>
    </citation>
    <scope>NUCLEOTIDE SEQUENCE [LARGE SCALE MRNA] (ISOFORM 2)</scope>
    <source>
        <tissue>Adipose tissue</tissue>
    </source>
</reference>
<reference key="4">
    <citation type="journal article" date="2004" name="Nature">
        <title>The DNA sequence and comparative analysis of human chromosome 5.</title>
        <authorList>
            <person name="Schmutz J."/>
            <person name="Martin J."/>
            <person name="Terry A."/>
            <person name="Couronne O."/>
            <person name="Grimwood J."/>
            <person name="Lowry S."/>
            <person name="Gordon L.A."/>
            <person name="Scott D."/>
            <person name="Xie G."/>
            <person name="Huang W."/>
            <person name="Hellsten U."/>
            <person name="Tran-Gyamfi M."/>
            <person name="She X."/>
            <person name="Prabhakar S."/>
            <person name="Aerts A."/>
            <person name="Altherr M."/>
            <person name="Bajorek E."/>
            <person name="Black S."/>
            <person name="Branscomb E."/>
            <person name="Caoile C."/>
            <person name="Challacombe J.F."/>
            <person name="Chan Y.M."/>
            <person name="Denys M."/>
            <person name="Detter J.C."/>
            <person name="Escobar J."/>
            <person name="Flowers D."/>
            <person name="Fotopulos D."/>
            <person name="Glavina T."/>
            <person name="Gomez M."/>
            <person name="Gonzales E."/>
            <person name="Goodstein D."/>
            <person name="Grigoriev I."/>
            <person name="Groza M."/>
            <person name="Hammon N."/>
            <person name="Hawkins T."/>
            <person name="Haydu L."/>
            <person name="Israni S."/>
            <person name="Jett J."/>
            <person name="Kadner K."/>
            <person name="Kimball H."/>
            <person name="Kobayashi A."/>
            <person name="Lopez F."/>
            <person name="Lou Y."/>
            <person name="Martinez D."/>
            <person name="Medina C."/>
            <person name="Morgan J."/>
            <person name="Nandkeshwar R."/>
            <person name="Noonan J.P."/>
            <person name="Pitluck S."/>
            <person name="Pollard M."/>
            <person name="Predki P."/>
            <person name="Priest J."/>
            <person name="Ramirez L."/>
            <person name="Retterer J."/>
            <person name="Rodriguez A."/>
            <person name="Rogers S."/>
            <person name="Salamov A."/>
            <person name="Salazar A."/>
            <person name="Thayer N."/>
            <person name="Tice H."/>
            <person name="Tsai M."/>
            <person name="Ustaszewska A."/>
            <person name="Vo N."/>
            <person name="Wheeler J."/>
            <person name="Wu K."/>
            <person name="Yang J."/>
            <person name="Dickson M."/>
            <person name="Cheng J.-F."/>
            <person name="Eichler E.E."/>
            <person name="Olsen A."/>
            <person name="Pennacchio L.A."/>
            <person name="Rokhsar D.S."/>
            <person name="Richardson P."/>
            <person name="Lucas S.M."/>
            <person name="Myers R.M."/>
            <person name="Rubin E.M."/>
        </authorList>
    </citation>
    <scope>NUCLEOTIDE SEQUENCE [LARGE SCALE GENOMIC DNA]</scope>
</reference>
<reference key="5">
    <citation type="journal article" date="2004" name="Genome Res.">
        <title>The status, quality, and expansion of the NIH full-length cDNA project: the Mammalian Gene Collection (MGC).</title>
        <authorList>
            <consortium name="The MGC Project Team"/>
        </authorList>
    </citation>
    <scope>NUCLEOTIDE SEQUENCE [LARGE SCALE MRNA] (ISOFORM 1)</scope>
    <source>
        <tissue>Prostate</tissue>
    </source>
</reference>
<reference key="6">
    <citation type="submission" date="2008-12" db="UniProtKB">
        <authorList>
            <person name="Bienvenut W.V."/>
            <person name="Heiserich L."/>
            <person name="Boulahbel H."/>
            <person name="Gottlieb E."/>
            <person name="Calvo F."/>
            <person name="Zebisch A."/>
            <person name="Lilla S."/>
            <person name="von Kriegsheim A."/>
            <person name="Lempens A."/>
            <person name="Kolch W."/>
        </authorList>
    </citation>
    <scope>PROTEIN SEQUENCE OF 2-13; 18-32; 37-59; 65-76; 108-132; 230-276; 308-314; 321-331; 336-370; 377-403; 430-443 AND 448-465</scope>
    <scope>CLEAVAGE OF INITIATOR METHIONINE</scope>
    <scope>METHYLATION AT ARG-435 AND ARG-460</scope>
    <scope>PHOSPHORYLATION AT SER-231 AND SER-232</scope>
    <scope>IDENTIFICATION BY MASS SPECTROMETRY</scope>
    <source>
        <tissue>Cervix carcinoma</tissue>
        <tissue>Colon carcinoma</tissue>
        <tissue>Ovarian carcinoma</tissue>
    </source>
</reference>
<reference key="7">
    <citation type="journal article" date="1999" name="Nucleic Acids Res.">
        <title>Human DNA helicase VIII: a DNA and RNA helicase corresponding to the G3BP protein, an element of the ras transduction pathway.</title>
        <authorList>
            <person name="Costa M."/>
            <person name="Ochem A."/>
            <person name="Staub A."/>
            <person name="Falaschi A."/>
        </authorList>
    </citation>
    <scope>PROTEIN SEQUENCE OF 248-257; 336-353; 394-403 AND 444-463</scope>
    <scope>FUNCTION AS A HELICASE</scope>
    <scope>CATALYTIC ACTIVITY</scope>
    <scope>COFACTOR</scope>
</reference>
<reference key="8">
    <citation type="journal article" date="2001" name="Mol. Cell. Biol.">
        <title>RasGAP-associated endoribonuclease G3Bp: selective RNA degradation and phosphorylation-dependent localization.</title>
        <authorList>
            <person name="Tourriere H."/>
            <person name="Gallouzi I.-E."/>
            <person name="Chebli K."/>
            <person name="Capony J.-P."/>
            <person name="Mouaikel J."/>
            <person name="van der Geer P."/>
            <person name="Tazi J."/>
        </authorList>
    </citation>
    <scope>FUNCTION AS AN ENDORIBONUCLEASE</scope>
    <scope>SUBCELLULAR LOCATION</scope>
    <scope>PHOSPHORYLATION AT SER-149 AND SER-232</scope>
    <scope>MUTAGENESIS OF SER-149 AND SER-232</scope>
</reference>
<reference key="9">
    <citation type="journal article" date="2001" name="Oncogene">
        <title>Ras-GAP SH3 domain binding protein (G3BP) is a modulator of USP10, a novel human ubiquitin specific protease.</title>
        <authorList>
            <person name="Soncini C."/>
            <person name="Berdo I."/>
            <person name="Draetta G."/>
        </authorList>
    </citation>
    <scope>INTERACTION WITH USP10</scope>
</reference>
<reference key="10">
    <citation type="journal article" date="2003" name="J. Cell Biol.">
        <title>The RasGAP-associated endoribonuclease G3BP assembles stress granules.</title>
        <authorList>
            <person name="Tourriere H."/>
            <person name="Chebli K."/>
            <person name="Zekri L."/>
            <person name="Courselaud B."/>
            <person name="Blanchard J.-M."/>
            <person name="Bertrand E."/>
            <person name="Tazi J."/>
        </authorList>
    </citation>
    <scope>FUNCTION</scope>
    <scope>RECRUITMENT TO STRESS GRANULES</scope>
    <scope>DIMERIZATION</scope>
    <scope>SUBCELLULAR LOCATION</scope>
    <scope>PHOSPHORYLATION</scope>
    <scope>MUTAGENESIS OF SER-149</scope>
</reference>
<reference key="11">
    <citation type="journal article" date="2004" name="Anal. Chem.">
        <title>Robust phosphoproteomic profiling of tyrosine phosphorylation sites from human T cells using immobilized metal affinity chromatography and tandem mass spectrometry.</title>
        <authorList>
            <person name="Brill L.M."/>
            <person name="Salomon A.R."/>
            <person name="Ficarro S.B."/>
            <person name="Mukherji M."/>
            <person name="Stettler-Gill M."/>
            <person name="Peters E.C."/>
        </authorList>
    </citation>
    <scope>IDENTIFICATION BY MASS SPECTROMETRY [LARGE SCALE ANALYSIS]</scope>
    <source>
        <tissue>Leukemic T-cell</tissue>
    </source>
</reference>
<reference key="12">
    <citation type="journal article" date="2006" name="Cell">
        <title>Global, in vivo, and site-specific phosphorylation dynamics in signaling networks.</title>
        <authorList>
            <person name="Olsen J.V."/>
            <person name="Blagoev B."/>
            <person name="Gnad F."/>
            <person name="Macek B."/>
            <person name="Kumar C."/>
            <person name="Mortensen P."/>
            <person name="Mann M."/>
        </authorList>
    </citation>
    <scope>PHOSPHORYLATION [LARGE SCALE ANALYSIS] AT SER-149</scope>
    <scope>IDENTIFICATION BY MASS SPECTROMETRY [LARGE SCALE ANALYSIS]</scope>
    <source>
        <tissue>Cervix carcinoma</tissue>
    </source>
</reference>
<reference key="13">
    <citation type="journal article" date="2006" name="Nat. Biotechnol.">
        <title>A probability-based approach for high-throughput protein phosphorylation analysis and site localization.</title>
        <authorList>
            <person name="Beausoleil S.A."/>
            <person name="Villen J."/>
            <person name="Gerber S.A."/>
            <person name="Rush J."/>
            <person name="Gygi S.P."/>
        </authorList>
    </citation>
    <scope>IDENTIFICATION BY MASS SPECTROMETRY [LARGE SCALE ANALYSIS]</scope>
    <source>
        <tissue>Cervix carcinoma</tissue>
    </source>
</reference>
<reference key="14">
    <citation type="journal article" date="2007" name="Electrophoresis">
        <title>Toward a global characterization of the phosphoproteome in prostate cancer cells: identification of phosphoproteins in the LNCaP cell line.</title>
        <authorList>
            <person name="Giorgianni F."/>
            <person name="Zhao Y."/>
            <person name="Desiderio D.M."/>
            <person name="Beranova-Giorgianni S."/>
        </authorList>
    </citation>
    <scope>IDENTIFICATION BY MASS SPECTROMETRY [LARGE SCALE ANALYSIS]</scope>
    <source>
        <tissue>Prostate cancer</tissue>
    </source>
</reference>
<reference key="15">
    <citation type="journal article" date="2007" name="Mol. Cell. Biol.">
        <title>Distinct structural features of caprin-1 mediate its interaction with G3BP-1 and its induction of phosphorylation of eukaryotic translation initiation factor 2alpha, entry to cytoplasmic stress granules, and selective interaction with a subset of mRNAs.</title>
        <authorList>
            <person name="Solomon S."/>
            <person name="Xu Y."/>
            <person name="Wang B."/>
            <person name="David M.D."/>
            <person name="Schubert P."/>
            <person name="Kennedy D."/>
            <person name="Schrader J.W."/>
        </authorList>
    </citation>
    <scope>INTERACTION WITH CAPRIN1</scope>
    <scope>SUBCELLULAR LOCATION</scope>
</reference>
<reference key="16">
    <citation type="journal article" date="2007" name="Mol. Cell. Proteomics">
        <title>Quantitative phosphoproteome profiling of Wnt3a-mediated signaling network: indicating the involvement of ribonucleoside-diphosphate reductase M2 subunit phosphorylation at residue serine 20 in canonical Wnt signal transduction.</title>
        <authorList>
            <person name="Tang L.-Y."/>
            <person name="Deng N."/>
            <person name="Wang L.-S."/>
            <person name="Dai J."/>
            <person name="Wang Z.-L."/>
            <person name="Jiang X.-S."/>
            <person name="Li S.-J."/>
            <person name="Li L."/>
            <person name="Sheng Q.-H."/>
            <person name="Wu D.-Q."/>
            <person name="Li L."/>
            <person name="Zeng R."/>
        </authorList>
    </citation>
    <scope>PHOSPHORYLATION [LARGE SCALE ANALYSIS] AT SER-149</scope>
    <scope>IDENTIFICATION BY MASS SPECTROMETRY [LARGE SCALE ANALYSIS]</scope>
    <source>
        <tissue>Embryonic kidney</tissue>
    </source>
</reference>
<reference key="17">
    <citation type="journal article" date="2008" name="J. Proteome Res.">
        <title>Combining protein-based IMAC, peptide-based IMAC, and MudPIT for efficient phosphoproteomic analysis.</title>
        <authorList>
            <person name="Cantin G.T."/>
            <person name="Yi W."/>
            <person name="Lu B."/>
            <person name="Park S.K."/>
            <person name="Xu T."/>
            <person name="Lee J.-D."/>
            <person name="Yates J.R. III"/>
        </authorList>
    </citation>
    <scope>PHOSPHORYLATION [LARGE SCALE ANALYSIS] AT SER-149</scope>
    <scope>IDENTIFICATION BY MASS SPECTROMETRY [LARGE SCALE ANALYSIS]</scope>
    <source>
        <tissue>Cervix carcinoma</tissue>
    </source>
</reference>
<reference key="18">
    <citation type="journal article" date="2008" name="J. Proteome Res.">
        <title>Phosphorylation analysis of primary human T lymphocytes using sequential IMAC and titanium oxide enrichment.</title>
        <authorList>
            <person name="Carrascal M."/>
            <person name="Ovelleiro D."/>
            <person name="Casas V."/>
            <person name="Gay M."/>
            <person name="Abian J."/>
        </authorList>
    </citation>
    <scope>IDENTIFICATION BY MASS SPECTROMETRY [LARGE SCALE ANALYSIS]</scope>
    <source>
        <tissue>T-cell</tissue>
    </source>
</reference>
<reference key="19">
    <citation type="journal article" date="2008" name="Mol. Cell">
        <title>Kinase-selective enrichment enables quantitative phosphoproteomics of the kinome across the cell cycle.</title>
        <authorList>
            <person name="Daub H."/>
            <person name="Olsen J.V."/>
            <person name="Bairlein M."/>
            <person name="Gnad F."/>
            <person name="Oppermann F.S."/>
            <person name="Korner R."/>
            <person name="Greff Z."/>
            <person name="Keri G."/>
            <person name="Stemmann O."/>
            <person name="Mann M."/>
        </authorList>
    </citation>
    <scope>PHOSPHORYLATION [LARGE SCALE ANALYSIS] AT SER-149</scope>
    <scope>IDENTIFICATION BY MASS SPECTROMETRY [LARGE SCALE ANALYSIS]</scope>
    <source>
        <tissue>Cervix carcinoma</tissue>
    </source>
</reference>
<reference key="20">
    <citation type="journal article" date="2008" name="Proc. Natl. Acad. Sci. U.S.A.">
        <title>A quantitative atlas of mitotic phosphorylation.</title>
        <authorList>
            <person name="Dephoure N."/>
            <person name="Zhou C."/>
            <person name="Villen J."/>
            <person name="Beausoleil S.A."/>
            <person name="Bakalarski C.E."/>
            <person name="Elledge S.J."/>
            <person name="Gygi S.P."/>
        </authorList>
    </citation>
    <scope>PHOSPHORYLATION [LARGE SCALE ANALYSIS] AT THR-143; SER-149; SER-232 AND SER-373</scope>
    <scope>IDENTIFICATION BY MASS SPECTROMETRY [LARGE SCALE ANALYSIS]</scope>
    <source>
        <tissue>Cervix carcinoma</tissue>
    </source>
</reference>
<reference key="21">
    <citation type="journal article" date="2008" name="Proteomics">
        <title>Large-scale phosphoproteome analysis of human liver tissue by enrichment and fractionation of phosphopeptides with strong anion exchange chromatography.</title>
        <authorList>
            <person name="Han G."/>
            <person name="Ye M."/>
            <person name="Zhou H."/>
            <person name="Jiang X."/>
            <person name="Feng S."/>
            <person name="Jiang X."/>
            <person name="Tian R."/>
            <person name="Wan D."/>
            <person name="Zou H."/>
            <person name="Gu J."/>
        </authorList>
    </citation>
    <scope>PHOSPHORYLATION [LARGE SCALE ANALYSIS] AT SER-149</scope>
    <scope>IDENTIFICATION BY MASS SPECTROMETRY [LARGE SCALE ANALYSIS]</scope>
    <source>
        <tissue>Liver</tissue>
    </source>
</reference>
<reference key="22">
    <citation type="journal article" date="2008" name="J. Virol.">
        <title>Different types of nsP3-containing protein complexes in Sindbis virus-infected cells.</title>
        <authorList>
            <person name="Gorchakov R."/>
            <person name="Garmashova N."/>
            <person name="Frolova E."/>
            <person name="Frolov I."/>
        </authorList>
    </citation>
    <scope>INTERACTION WITH SINBIS VIRUS NON-STRUCTURAL PROTEIN 3 (MICROBIAL INFECTION)</scope>
</reference>
<reference key="23">
    <citation type="journal article" date="2009" name="Anal. Chem.">
        <title>Lys-N and trypsin cover complementary parts of the phosphoproteome in a refined SCX-based approach.</title>
        <authorList>
            <person name="Gauci S."/>
            <person name="Helbig A.O."/>
            <person name="Slijper M."/>
            <person name="Krijgsveld J."/>
            <person name="Heck A.J."/>
            <person name="Mohammed S."/>
        </authorList>
    </citation>
    <scope>IDENTIFICATION BY MASS SPECTROMETRY [LARGE SCALE ANALYSIS]</scope>
</reference>
<reference key="24">
    <citation type="journal article" date="2009" name="Mol. Cell. Proteomics">
        <title>Large-scale proteomics analysis of the human kinome.</title>
        <authorList>
            <person name="Oppermann F.S."/>
            <person name="Gnad F."/>
            <person name="Olsen J.V."/>
            <person name="Hornberger R."/>
            <person name="Greff Z."/>
            <person name="Keri G."/>
            <person name="Mann M."/>
            <person name="Daub H."/>
        </authorList>
    </citation>
    <scope>IDENTIFICATION BY MASS SPECTROMETRY [LARGE SCALE ANALYSIS]</scope>
</reference>
<reference key="25">
    <citation type="journal article" date="2009" name="Sci. Signal.">
        <title>Quantitative phosphoproteomic analysis of T cell receptor signaling reveals system-wide modulation of protein-protein interactions.</title>
        <authorList>
            <person name="Mayya V."/>
            <person name="Lundgren D.H."/>
            <person name="Hwang S.-I."/>
            <person name="Rezaul K."/>
            <person name="Wu L."/>
            <person name="Eng J.K."/>
            <person name="Rodionov V."/>
            <person name="Han D.K."/>
        </authorList>
    </citation>
    <scope>PHOSPHORYLATION [LARGE SCALE ANALYSIS] AT SER-232</scope>
    <scope>IDENTIFICATION BY MASS SPECTROMETRY [LARGE SCALE ANALYSIS]</scope>
    <source>
        <tissue>Leukemic T-cell</tissue>
    </source>
</reference>
<reference key="26">
    <citation type="journal article" date="2009" name="Science">
        <title>Lysine acetylation targets protein complexes and co-regulates major cellular functions.</title>
        <authorList>
            <person name="Choudhary C."/>
            <person name="Kumar C."/>
            <person name="Gnad F."/>
            <person name="Nielsen M.L."/>
            <person name="Rehman M."/>
            <person name="Walther T.C."/>
            <person name="Olsen J.V."/>
            <person name="Mann M."/>
        </authorList>
    </citation>
    <scope>ACETYLATION [LARGE SCALE ANALYSIS] AT LYS-376</scope>
    <scope>IDENTIFICATION BY MASS SPECTROMETRY [LARGE SCALE ANALYSIS]</scope>
</reference>
<reference key="27">
    <citation type="journal article" date="2010" name="Biochem. J.">
        <title>The pseudophosphatase MK-STYX interacts with G3BP and decreases stress granule formation.</title>
        <authorList>
            <person name="Hinton S.D."/>
            <person name="Myers M.P."/>
            <person name="Roggero V.R."/>
            <person name="Allison L.A."/>
            <person name="Tonks N.K."/>
        </authorList>
    </citation>
    <scope>FUNCTION</scope>
    <scope>INTERACTION WITH STYXL1</scope>
    <scope>SUBCELLULAR LOCATION</scope>
</reference>
<reference key="28">
    <citation type="journal article" date="2010" name="Sci. Signal.">
        <title>Quantitative phosphoproteomics reveals widespread full phosphorylation site occupancy during mitosis.</title>
        <authorList>
            <person name="Olsen J.V."/>
            <person name="Vermeulen M."/>
            <person name="Santamaria A."/>
            <person name="Kumar C."/>
            <person name="Miller M.L."/>
            <person name="Jensen L.J."/>
            <person name="Gnad F."/>
            <person name="Cox J."/>
            <person name="Jensen T.S."/>
            <person name="Nigg E.A."/>
            <person name="Brunak S."/>
            <person name="Mann M."/>
        </authorList>
    </citation>
    <scope>PHOSPHORYLATION [LARGE SCALE ANALYSIS] AT SER-149; SER-232 AND SER-373</scope>
    <scope>IDENTIFICATION BY MASS SPECTROMETRY [LARGE SCALE ANALYSIS]</scope>
    <source>
        <tissue>Cervix carcinoma</tissue>
    </source>
</reference>
<reference key="29">
    <citation type="journal article" date="2011" name="BMC Syst. Biol.">
        <title>Initial characterization of the human central proteome.</title>
        <authorList>
            <person name="Burkard T.R."/>
            <person name="Planyavsky M."/>
            <person name="Kaupe I."/>
            <person name="Breitwieser F.P."/>
            <person name="Buerckstuemmer T."/>
            <person name="Bennett K.L."/>
            <person name="Superti-Furga G."/>
            <person name="Colinge J."/>
        </authorList>
    </citation>
    <scope>IDENTIFICATION BY MASS SPECTROMETRY [LARGE SCALE ANALYSIS]</scope>
</reference>
<reference key="30">
    <citation type="journal article" date="2011" name="Sci. Signal.">
        <title>System-wide temporal characterization of the proteome and phosphoproteome of human embryonic stem cell differentiation.</title>
        <authorList>
            <person name="Rigbolt K.T."/>
            <person name="Prokhorova T.A."/>
            <person name="Akimov V."/>
            <person name="Henningsen J."/>
            <person name="Johansen P.T."/>
            <person name="Kratchmarova I."/>
            <person name="Kassem M."/>
            <person name="Mann M."/>
            <person name="Olsen J.V."/>
            <person name="Blagoev B."/>
        </authorList>
    </citation>
    <scope>PHOSPHORYLATION [LARGE SCALE ANALYSIS] AT SER-149 AND SER-232</scope>
    <scope>IDENTIFICATION BY MASS SPECTROMETRY [LARGE SCALE ANALYSIS]</scope>
</reference>
<reference key="31">
    <citation type="journal article" date="2012" name="PLoS ONE">
        <title>Ataxin-2-like is a regulator of stress granules and processing bodies.</title>
        <authorList>
            <person name="Kaehler C."/>
            <person name="Isensee J."/>
            <person name="Nonhoff U."/>
            <person name="Terrey M."/>
            <person name="Hucho T."/>
            <person name="Lehrach H."/>
            <person name="Krobitsch S."/>
        </authorList>
    </citation>
    <scope>INTERACTION WITH ATXN2L</scope>
</reference>
<reference key="32">
    <citation type="journal article" date="2012" name="Mol. Biol. Cell">
        <title>Sequestration of G3BP coupled with efficient translation inhibits stress granules in Semliki Forest virus infection.</title>
        <authorList>
            <person name="Panas M.D."/>
            <person name="Varjak M."/>
            <person name="Lulla A."/>
            <person name="Eng K.E."/>
            <person name="Merits A."/>
            <person name="Karlsson Hedestam G.B."/>
            <person name="McInerney G.M."/>
        </authorList>
    </citation>
    <scope>INTERACTION WITH SEMLIKI FOREST VIRUS NON-STRUCTURAL PROTEIN 3 (MICROBIAL INFECTION)</scope>
</reference>
<reference key="33">
    <citation type="journal article" date="2013" name="Cell">
        <title>Inhibition of mTORC1 by astrin and stress granules prevents apoptosis in cancer cells.</title>
        <authorList>
            <person name="Thedieck K."/>
            <person name="Holzwarth B."/>
            <person name="Prentzell M.T."/>
            <person name="Boehlke C."/>
            <person name="Klasener K."/>
            <person name="Ruf S."/>
            <person name="Sonntag A.G."/>
            <person name="Maerz L."/>
            <person name="Grellscheid S.N."/>
            <person name="Kremmer E."/>
            <person name="Nitschke R."/>
            <person name="Kuehn E.W."/>
            <person name="Jonker J.W."/>
            <person name="Groen A.K."/>
            <person name="Reth M."/>
            <person name="Hall M.N."/>
            <person name="Baumeister R."/>
        </authorList>
    </citation>
    <scope>INTERACTION WITH RPTOR AND SPAG5</scope>
    <scope>SUBCELLULAR LOCATION</scope>
</reference>
<reference key="34">
    <citation type="journal article" date="2013" name="J. Proteome Res.">
        <title>Toward a comprehensive characterization of a human cancer cell phosphoproteome.</title>
        <authorList>
            <person name="Zhou H."/>
            <person name="Di Palma S."/>
            <person name="Preisinger C."/>
            <person name="Peng M."/>
            <person name="Polat A.N."/>
            <person name="Heck A.J."/>
            <person name="Mohammed S."/>
        </authorList>
    </citation>
    <scope>PHOSPHORYLATION [LARGE SCALE ANALYSIS] AT SER-149; SER-250 AND SER-253</scope>
    <scope>IDENTIFICATION BY MASS SPECTROMETRY [LARGE SCALE ANALYSIS]</scope>
    <source>
        <tissue>Cervix carcinoma</tissue>
        <tissue>Erythroleukemia</tissue>
    </source>
</reference>
<reference key="35">
    <citation type="journal article" date="2013" name="Genes Cells">
        <title>Both G3BP1 and G3BP2 contribute to stress granule formation.</title>
        <authorList>
            <person name="Matsuki H."/>
            <person name="Takahashi M."/>
            <person name="Higuchi M."/>
            <person name="Makokha G.N."/>
            <person name="Oie M."/>
            <person name="Fujii M."/>
        </authorList>
    </citation>
    <scope>FUNCTION</scope>
    <scope>INTERACTION WITH G3BP2; USP10 AND PABPC1</scope>
</reference>
<reference key="36">
    <citation type="journal article" date="2013" name="J. Virol.">
        <title>Encephalomyocarditis virus disrupts stress granules, the critical platform for triggering antiviral innate immune responses.</title>
        <authorList>
            <person name="Ng C.S."/>
            <person name="Jogi M."/>
            <person name="Yoo J.S."/>
            <person name="Onomoto K."/>
            <person name="Koike S."/>
            <person name="Iwasaki T."/>
            <person name="Yoneyama M."/>
            <person name="Kato H."/>
            <person name="Fujita T."/>
        </authorList>
    </citation>
    <scope>PROTEOLYTIC CLEAVAGE (MICROBIAL INFECTION)</scope>
    <scope>MUTAGENESIS OF GLN-325</scope>
</reference>
<reference key="37">
    <citation type="journal article" date="2014" name="J. Virol.">
        <title>The C-terminal repeat domains of nsP3 from the Old World alphaviruses bind directly to G3BP.</title>
        <authorList>
            <person name="Panas M.D."/>
            <person name="Ahola T."/>
            <person name="McInerney G.M."/>
        </authorList>
    </citation>
    <scope>INTERACTION WITH SEMLIKI FOREST VIRUS NON-STRUCTURAL PROTEIN 3 (MICROBIAL INFECTION)</scope>
    <scope>INTERACTION WITH CHIKUNGUNYA VIRUS NON-STRUCTURAL PROTEIN 3 (MICROBIAL INFECTION)</scope>
</reference>
<reference key="38">
    <citation type="journal article" date="2014" name="J. Proteomics">
        <title>An enzyme assisted RP-RPLC approach for in-depth analysis of human liver phosphoproteome.</title>
        <authorList>
            <person name="Bian Y."/>
            <person name="Song C."/>
            <person name="Cheng K."/>
            <person name="Dong M."/>
            <person name="Wang F."/>
            <person name="Huang J."/>
            <person name="Sun D."/>
            <person name="Wang L."/>
            <person name="Ye M."/>
            <person name="Zou H."/>
        </authorList>
    </citation>
    <scope>PHOSPHORYLATION [LARGE SCALE ANALYSIS] AT SER-149 AND SER-232</scope>
    <scope>IDENTIFICATION BY MASS SPECTROMETRY [LARGE SCALE ANALYSIS]</scope>
    <source>
        <tissue>Liver</tissue>
    </source>
</reference>
<reference key="39">
    <citation type="journal article" date="2014" name="Mol. Cell. Proteomics">
        <title>Immunoaffinity enrichment and mass spectrometry analysis of protein methylation.</title>
        <authorList>
            <person name="Guo A."/>
            <person name="Gu H."/>
            <person name="Zhou J."/>
            <person name="Mulhern D."/>
            <person name="Wang Y."/>
            <person name="Lee K.A."/>
            <person name="Yang V."/>
            <person name="Aguiar M."/>
            <person name="Kornhauser J."/>
            <person name="Jia X."/>
            <person name="Ren J."/>
            <person name="Beausoleil S.A."/>
            <person name="Silva J.C."/>
            <person name="Vemulapalli V."/>
            <person name="Bedford M.T."/>
            <person name="Comb M.J."/>
        </authorList>
    </citation>
    <scope>METHYLATION [LARGE SCALE ANALYSIS] AT ARG-429; ARG-435; ARG-447; ARG-460 AND ARG-465</scope>
    <scope>IDENTIFICATION BY MASS SPECTROMETRY [LARGE SCALE ANALYSIS]</scope>
    <source>
        <tissue>Colon carcinoma</tissue>
    </source>
</reference>
<reference key="40">
    <citation type="journal article" date="2015" name="PLoS Pathog.">
        <title>Viral and cellular proteins containing FGDF motifs bind G3BP to block stress granule formation.</title>
        <authorList>
            <person name="Panas M.D."/>
            <person name="Schulte T."/>
            <person name="Thaa B."/>
            <person name="Sandalova T."/>
            <person name="Kedersha N."/>
            <person name="Achour A."/>
            <person name="McInerney G.M."/>
        </authorList>
    </citation>
    <scope>INTERACTION WITH SEMLIKI FOREST VIRUS NON-STRUCTURAL PROTEIN 3 (MICROBIAL INFECTION)</scope>
</reference>
<reference key="41">
    <citation type="journal article" date="2015" name="Proteomics">
        <title>N-terminome analysis of the human mitochondrial proteome.</title>
        <authorList>
            <person name="Vaca Jacome A.S."/>
            <person name="Rabilloud T."/>
            <person name="Schaeffer-Reiss C."/>
            <person name="Rompais M."/>
            <person name="Ayoub D."/>
            <person name="Lane L."/>
            <person name="Bairoch A."/>
            <person name="Van Dorsselaer A."/>
            <person name="Carapito C."/>
        </authorList>
    </citation>
    <scope>IDENTIFICATION BY MASS SPECTROMETRY [LARGE SCALE ANALYSIS]</scope>
</reference>
<reference key="42">
    <citation type="journal article" date="2016" name="J. Cell Biol.">
        <title>G3BP-Caprin1-USP10 complexes mediate stress granule condensation and associate with 40S subunits.</title>
        <authorList>
            <person name="Kedersha N."/>
            <person name="Panas M.D."/>
            <person name="Achorn C.A."/>
            <person name="Lyons S."/>
            <person name="Tisdale S."/>
            <person name="Hickman T."/>
            <person name="Thomas M."/>
            <person name="Lieberman J."/>
            <person name="McInerney G.M."/>
            <person name="Ivanov P."/>
            <person name="Anderson P."/>
        </authorList>
    </citation>
    <scope>FUNCTION</scope>
    <scope>SUBCELLULAR LOCATION</scope>
    <scope>INTERACTION WITH 40S RIBOSOME; USP10 AND CAPRIN1</scope>
    <scope>MUTAGENESIS OF PHE-33</scope>
</reference>
<reference key="43">
    <citation type="journal article" date="2016" name="Open Biol.">
        <title>Combined structural, biochemical and cellular evidence demonstrates that both FGDF motifs in alphavirus nsP3 are required for efficient replication.</title>
        <authorList>
            <person name="Schulte T."/>
            <person name="Liu L."/>
            <person name="Panas M.D."/>
            <person name="Thaa B."/>
            <person name="Dickson N."/>
            <person name="Gotte B."/>
            <person name="Achour A."/>
            <person name="McInerney G.M."/>
        </authorList>
    </citation>
    <scope>INTERACTION WITH SEMLIKI FOREST VIRUS NON-STRUCTURAL PROTEIN 3 (MICROBIAL INFECTION)</scope>
    <scope>INTERACTION WITH CHIKUNGUNYA VIRUS NON-STRUCTURAL PROTEIN 3 (MICROBIAL INFECTION)</scope>
</reference>
<reference key="44">
    <citation type="journal article" date="2017" name="J. Virol.">
        <title>Mammalian Orthoreovirus Factories Modulate Stress Granule Protein Localization by Interaction with G3BP1.</title>
        <authorList>
            <person name="Choudhury P."/>
            <person name="Bussiere L.D."/>
            <person name="Miller C.L."/>
        </authorList>
    </citation>
    <scope>INTERACTION WITH REOVIRUS TYPE 2 PROTEIN SIGMA-NS (MICROBIAL INFECTION)</scope>
    <scope>SUBCELLULAR LOCATION (MICROBIAL INFECTION)</scope>
</reference>
<reference key="45">
    <citation type="journal article" date="2017" name="Nat. Struct. Mol. Biol.">
        <title>Site-specific mapping of the human SUMO proteome reveals co-modification with phosphorylation.</title>
        <authorList>
            <person name="Hendriks I.A."/>
            <person name="Lyon D."/>
            <person name="Young C."/>
            <person name="Jensen L.J."/>
            <person name="Vertegaal A.C."/>
            <person name="Nielsen M.L."/>
        </authorList>
    </citation>
    <scope>SUMOYLATION [LARGE SCALE ANALYSIS] AT LYS-376</scope>
    <scope>IDENTIFICATION BY MASS SPECTROMETRY [LARGE SCALE ANALYSIS]</scope>
</reference>
<reference key="46">
    <citation type="journal article" date="2017" name="J. Virol.">
        <title>Zika virus hijacks stress granule proteins and modulates the host stress response.</title>
        <authorList>
            <person name="Hou S."/>
            <person name="Kumar A."/>
            <person name="Xu Z."/>
            <person name="Airo A.M."/>
            <person name="Stryapunina I."/>
            <person name="Wong C.P."/>
            <person name="Branton W."/>
            <person name="Tchesnokov E."/>
            <person name="Goette M."/>
            <person name="Power C."/>
            <person name="Hobman T.C."/>
        </authorList>
    </citation>
    <scope>INTERACTION WITH ZIKA VIRUS CAPSID PROTEIN C (MICROBIAL INFECTION)</scope>
</reference>
<reference key="47">
    <citation type="journal article" date="2018" name="Virus Res.">
        <title>Enterovirus 71 inhibits cytoplasmic stress granule formation during the late stage of infection.</title>
        <authorList>
            <person name="Zhang Y."/>
            <person name="Yao L."/>
            <person name="Xu X."/>
            <person name="Han H."/>
            <person name="Li P."/>
            <person name="Zou D."/>
            <person name="Li X."/>
            <person name="Zheng L."/>
            <person name="Cheng L."/>
            <person name="Shen Y."/>
            <person name="Wang X."/>
            <person name="Wu X."/>
            <person name="Xu J."/>
            <person name="Song B."/>
            <person name="Xu S."/>
            <person name="Zhang H."/>
            <person name="Cao H."/>
        </authorList>
    </citation>
    <scope>SUBCELLULAR LOCATION</scope>
    <scope>MUTAGENESIS OF GLN-325</scope>
    <scope>CLEAVAGE BY HUMAN ENTEROVIRUS 71 PROTEASE 3C (MICROBIAL INFECTION)</scope>
    <scope>CLEAVAGE SITE</scope>
</reference>
<reference key="48">
    <citation type="journal article" date="2019" name="J. Virol.">
        <title>Foot-and-Mouth Disease Virus Leader Protease Cleaves G3BP1 and G3BP2 and Inhibits Stress Granule Formation.</title>
        <authorList>
            <person name="Visser L.J."/>
            <person name="Medina G.N."/>
            <person name="Rabouw H.H."/>
            <person name="de Groot R.J."/>
            <person name="Langereis M.A."/>
            <person name="de Los Santos T."/>
            <person name="van Kuppeveld F.J.M."/>
        </authorList>
    </citation>
    <scope>SUBCELLULAR LOCATION</scope>
    <scope>CLEAVAGE BY FOOT-AND-MOUTH DISEASE VIRUS LEADER PROTEASE (MICROBIAL INFECTION)</scope>
</reference>
<reference key="49">
    <citation type="journal article" date="2019" name="Nat. Immunol.">
        <title>G3BP1 promotes DNA binding and activation of cGAS.</title>
        <authorList>
            <person name="Liu Z.S."/>
            <person name="Cai H."/>
            <person name="Xue W."/>
            <person name="Wang M."/>
            <person name="Xia T."/>
            <person name="Li W.J."/>
            <person name="Xing J.Q."/>
            <person name="Zhao M."/>
            <person name="Huang Y.J."/>
            <person name="Chen S."/>
            <person name="Wu S.M."/>
            <person name="Wang X."/>
            <person name="Liu X."/>
            <person name="Pang X."/>
            <person name="Zhang Z.Y."/>
            <person name="Li T."/>
            <person name="Dai J."/>
            <person name="Dong F."/>
            <person name="Xia Q."/>
            <person name="Li A.L."/>
            <person name="Zhou T."/>
            <person name="Liu Z.G."/>
            <person name="Zhang X.M."/>
            <person name="Li T."/>
        </authorList>
    </citation>
    <scope>FUNCTION</scope>
    <scope>SUBCELLULAR LOCATION</scope>
    <scope>INTERACTION WITH CGAS</scope>
</reference>
<reference key="50">
    <citation type="journal article" date="2019" name="J. Biol. Chem.">
        <title>The stress granule protein G3BP1 binds viral dsRNA and RIG-I to enhance IFN-beta response.</title>
        <authorList>
            <person name="Kim S.S."/>
            <person name="Sze L."/>
            <person name="Lam K.P."/>
        </authorList>
    </citation>
    <scope>FUNCTION</scope>
    <scope>INTERACTION WITH RIGI</scope>
</reference>
<reference key="51">
    <citation type="journal article" date="2020" name="Cell">
        <title>Competing protein-RNA interaction networks control multiphase intracellular organization.</title>
        <authorList>
            <person name="Sanders D.W."/>
            <person name="Kedersha N."/>
            <person name="Lee D.S.W."/>
            <person name="Strom A.R."/>
            <person name="Drake V."/>
            <person name="Riback J.A."/>
            <person name="Bracha D."/>
            <person name="Eeftens J.M."/>
            <person name="Iwanicki A."/>
            <person name="Wang A."/>
            <person name="Wei M.T."/>
            <person name="Whitney G."/>
            <person name="Lyons S.M."/>
            <person name="Anderson P."/>
            <person name="Jacobs W.M."/>
            <person name="Ivanov P."/>
            <person name="Brangwynne C.P."/>
        </authorList>
    </citation>
    <scope>FUNCTION</scope>
    <scope>ACTIVITY REGULATION</scope>
    <scope>SUBCELLULAR LOCATION</scope>
    <scope>DOMAIN</scope>
    <scope>INTERACTION WITH CAPRIN1; USP10 AND UBAP2L</scope>
</reference>
<reference key="52">
    <citation type="journal article" date="2020" name="Cell">
        <title>G3BP1 is a tunable switch that triggers phase separation to assemble stress granules.</title>
        <authorList>
            <person name="Yang P."/>
            <person name="Mathieu C."/>
            <person name="Kolaitis R.M."/>
            <person name="Zhang P."/>
            <person name="Messing J."/>
            <person name="Yurtsever U."/>
            <person name="Yang Z."/>
            <person name="Wu J."/>
            <person name="Li Y."/>
            <person name="Pan Q."/>
            <person name="Yu J."/>
            <person name="Martin E.W."/>
            <person name="Mittag T."/>
            <person name="Kim H.J."/>
            <person name="Taylor J.P."/>
        </authorList>
    </citation>
    <scope>FUNCTION</scope>
    <scope>ACTIVITY REGULATION</scope>
    <scope>SUBCELLULAR LOCATION</scope>
    <scope>DOMAIN</scope>
    <scope>INTERACTION WITH CAPRIN1</scope>
    <scope>PHOSPHORYLATION AT SER-149</scope>
    <scope>MUTAGENESIS OF PHE-33; SER-149 AND 380-PHE--PHE-382</scope>
</reference>
<reference key="53">
    <citation type="journal article" date="2020" name="Cell">
        <title>RNA-Induced conformational switching and clustering of G3BP drive stress granule assembly by condensation.</title>
        <authorList>
            <person name="Guillen-Boixet J."/>
            <person name="Kopach A."/>
            <person name="Holehouse A.S."/>
            <person name="Wittmann S."/>
            <person name="Jahnel M."/>
            <person name="Schluessler R."/>
            <person name="Kim K."/>
            <person name="Trussina I.R.E.A."/>
            <person name="Wang J."/>
            <person name="Mateju D."/>
            <person name="Poser I."/>
            <person name="Maharana S."/>
            <person name="Ruer-Gruss M."/>
            <person name="Richter D."/>
            <person name="Zhang X."/>
            <person name="Chang Y.T."/>
            <person name="Guck J."/>
            <person name="Honigmann A."/>
            <person name="Mahamid J."/>
            <person name="Hyman A.A."/>
            <person name="Pappu R.V."/>
            <person name="Alberti S."/>
            <person name="Franzmann T.M."/>
        </authorList>
    </citation>
    <scope>FUNCTION</scope>
    <scope>ACTIVITY REGULATION</scope>
    <scope>SUBCELLULAR LOCATION</scope>
    <scope>DOMAIN</scope>
    <scope>INTERACTION WITH CAPRIN1</scope>
    <scope>PHOSPHORYLATION AT SER-149 AND SER-232</scope>
    <scope>MUTAGENESIS OF SER-149 AND SER-232</scope>
</reference>
<reference key="54">
    <citation type="journal article" date="2020" name="Mol. Cell">
        <title>The G3BP1-family-USP10 deubiquitinase complex rescues ubiquitinated 40S subunits of ribosomes stalled in translation from lysosomal degradation.</title>
        <authorList>
            <person name="Meyer C."/>
            <person name="Garzia A."/>
            <person name="Morozov P."/>
            <person name="Molina H."/>
            <person name="Tuschl T."/>
        </authorList>
    </citation>
    <scope>INTERACTION WITH USP10</scope>
</reference>
<reference key="55">
    <citation type="journal article" date="2021" name="Science">
        <title>Ubiquitination of G3BP1 mediates stress granule disassembly in a context-specific manner.</title>
        <authorList>
            <person name="Gwon Y."/>
            <person name="Maxwell B.A."/>
            <person name="Kolaitis R.M."/>
            <person name="Zhang P."/>
            <person name="Kim H.J."/>
            <person name="Taylor J.P."/>
        </authorList>
    </citation>
    <scope>FUNCTION</scope>
    <scope>UBIQUITINATION AT LYS-36; LYS-50; LYS-59; LYS-64; LYS-76; LYS-123; LYS-353; LYS-357; LYS-376 AND LYS-393</scope>
    <scope>MUTAGENESIS OF LYS-36; LYS-50; LYS-59; LYS-64; LYS-76; LYS-123; LYS-353; LYS-357; LYS-376 AND LYS-393</scope>
</reference>
<reference key="56">
    <citation type="journal article" date="2022" name="EMBO Rep.">
        <title>The stress granule protein G3BP1 promotes pre-condensation of cGAS to allow rapid responses to DNA.</title>
        <authorList>
            <person name="Zhao M."/>
            <person name="Xia T."/>
            <person name="Xing J.Q."/>
            <person name="Yin L.H."/>
            <person name="Li X.W."/>
            <person name="Pan J."/>
            <person name="Liu J.Y."/>
            <person name="Sun L.M."/>
            <person name="Wang M."/>
            <person name="Li T."/>
            <person name="Mao J."/>
            <person name="Han Q.Y."/>
            <person name="Xue W."/>
            <person name="Cai H."/>
            <person name="Wang K."/>
            <person name="Xu X."/>
            <person name="Li T."/>
            <person name="He K."/>
            <person name="Wang N."/>
            <person name="Li A.L."/>
            <person name="Zhou T."/>
            <person name="Zhang X.M."/>
            <person name="Li W.H."/>
            <person name="Li T."/>
        </authorList>
    </citation>
    <scope>FUNCTION</scope>
    <scope>INTERACTION WITH CGAS</scope>
</reference>
<reference key="57">
    <citation type="journal article" date="2023" name="Autophagy">
        <title>Stress granule homeostasis is modulated by TRIM21-mediated ubiquitination of G3BP1 and autophagy-dependent elimination of stress granules.</title>
        <authorList>
            <person name="Yang C."/>
            <person name="Wang Z."/>
            <person name="Kang Y."/>
            <person name="Yi Q."/>
            <person name="Wang T."/>
            <person name="Bai Y."/>
            <person name="Liu Y."/>
        </authorList>
    </citation>
    <scope>FUNCTION</scope>
    <scope>UBIQUITINATION</scope>
</reference>
<reference key="58">
    <citation type="journal article" date="2023" name="Cell">
        <title>QKI shuttles internal m7G-modified transcripts into stress granules and modulates mRNA metabolism.</title>
        <authorList>
            <person name="Zhao Z."/>
            <person name="Qing Y."/>
            <person name="Dong L."/>
            <person name="Han L."/>
            <person name="Wu D."/>
            <person name="Li Y."/>
            <person name="Li W."/>
            <person name="Xue J."/>
            <person name="Zhou K."/>
            <person name="Sun M."/>
            <person name="Tan B."/>
            <person name="Chen Z."/>
            <person name="Shen C."/>
            <person name="Gao L."/>
            <person name="Small A."/>
            <person name="Wang K."/>
            <person name="Leung K."/>
            <person name="Zhang Z."/>
            <person name="Qin X."/>
            <person name="Deng X."/>
            <person name="Xia Q."/>
            <person name="Su R."/>
            <person name="Chen J."/>
        </authorList>
    </citation>
    <scope>FUNCTION</scope>
    <scope>INTERACTION WITH QKI</scope>
</reference>
<reference key="59">
    <citation type="journal article" date="2024" name="Virol. J.">
        <title>SARS-CoV-2 nucleocapsid protein promotes self-deacetylation by inducing HDAC6 to facilitate viral replication.</title>
        <authorList>
            <person name="Mukherjee A."/>
            <person name="Lo M."/>
            <person name="Chandra P."/>
            <person name="Datta Chaudhuri R."/>
            <person name="De P."/>
            <person name="Dutta S."/>
            <person name="Chawla-Sarkar M."/>
        </authorList>
    </citation>
    <scope>INTERACTION WITH HDAC6 AND SARS-COV-2 N PROTEIN</scope>
</reference>
<reference key="60">
    <citation type="journal article" date="2022" name="Sci. Adv.">
        <title>De novo variants in genes regulating stress granule assembly associate with neurodevelopmental disorders.</title>
        <authorList>
            <person name="Jia X."/>
            <person name="Zhang S."/>
            <person name="Tan S."/>
            <person name="Du B."/>
            <person name="He M."/>
            <person name="Qin H."/>
            <person name="Chen J."/>
            <person name="Duan X."/>
            <person name="Luo J."/>
            <person name="Chen F."/>
            <person name="Ouyang L."/>
            <person name="Wang J."/>
            <person name="Chen G."/>
            <person name="Yu B."/>
            <person name="Zhang G."/>
            <person name="Zhang Z."/>
            <person name="Lyu Y."/>
            <person name="Huang Y."/>
            <person name="Jiao J."/>
            <person name="Chen J.Y.H."/>
            <person name="Swoboda K.J."/>
            <person name="Agolini E."/>
            <person name="Novelli A."/>
            <person name="Leoni C."/>
            <person name="Zampino G."/>
            <person name="Cappuccio G."/>
            <person name="Brunetti-Pierri N."/>
            <person name="Gerard B."/>
            <person name="Ginglinger E."/>
            <person name="Richer J."/>
            <person name="McMillan H."/>
            <person name="White-Brown A."/>
            <person name="Hoekzema K."/>
            <person name="Bernier R.A."/>
            <person name="Kurtz-Nelson E.C."/>
            <person name="Earl R.K."/>
            <person name="Meddens C."/>
            <person name="Alders M."/>
            <person name="Fuchs M."/>
            <person name="Caumes R."/>
            <person name="Brunelle P."/>
            <person name="Smol T."/>
            <person name="Kuehl R."/>
            <person name="Day-Salvatore D.L."/>
            <person name="Monaghan K.G."/>
            <person name="Morrow M.M."/>
            <person name="Eichler E.E."/>
            <person name="Hu Z."/>
            <person name="Yuan L."/>
            <person name="Tan J."/>
            <person name="Xia K."/>
            <person name="Shen Y."/>
            <person name="Guo H."/>
        </authorList>
    </citation>
    <scope>FUNCTION</scope>
    <scope>VARIANTS CYS-78; ILE-132; CYS-208; CYS-320 AND MET-366</scope>
    <scope>CHARACTERIZATION OF VARIANTS CYS-78; ILE-132; CYS-208; CYS-320 AND MET-366</scope>
</reference>
<reference key="61">
    <citation type="submission" date="2011-02" db="PDB data bank">
        <title>Crystal structure of the NTF2 domain of ras GTPase-activating protein-binding protein 1.</title>
        <authorList>
            <consortium name="Structural genomics consortium (SGC)"/>
        </authorList>
    </citation>
    <scope>X-RAY CRYSTALLOGRAPHY (1.7 ANGSTROMS) OF 1-139</scope>
</reference>
<reference key="62">
    <citation type="journal article" date="2013" name="PLoS ONE">
        <title>Crystal structures of the human G3BP1 NTF2-like domain visualize FxFG Nup repeat specificity.</title>
        <authorList>
            <person name="Vognsen T."/>
            <person name="Moeller I.R."/>
            <person name="Kristensen O."/>
        </authorList>
    </citation>
    <scope>X-RAY CRYSTALLOGRAPHY (1.62 ANGSTROMS) OF 1-139</scope>
    <scope>SUBUNIT</scope>
</reference>
<reference evidence="47" key="63">
    <citation type="journal article" date="2022" name="J. Biol. Chem.">
        <title>Tryptophan mutations in G3BP1 tune the stability of a cellular signaling hub by weakening transient interactions with Caprin1 and USP10.</title>
        <authorList>
            <person name="Sheehan C.T."/>
            <person name="Hampton T.H."/>
            <person name="Madden D.R."/>
        </authorList>
    </citation>
    <scope>X-RAY CRYSTALLOGRAPHY (2.36 ANGSTROMS) OF 1-138</scope>
    <scope>FUNCTION</scope>
    <scope>INTERACTION WITH CAPRIN1 AND USP10</scope>
    <scope>MUTAGENESIS OF PHE-15; PHE-33 AND PHE-124</scope>
</reference>
<reference key="64">
    <citation type="journal article" date="2022" name="Proc. Natl. Acad. Sci. U.S.A.">
        <title>Yin and yang regulation of stress granules by Caprin-1.</title>
        <authorList>
            <person name="Song D."/>
            <person name="Kuang L."/>
            <person name="Yang L."/>
            <person name="Wang L."/>
            <person name="Li H."/>
            <person name="Li X."/>
            <person name="Zhu Z."/>
            <person name="Shi C."/>
            <person name="Zhu H."/>
            <person name="Gong W."/>
        </authorList>
    </citation>
    <scope>X-RAY CRYSTALLOGRAPHY (2.46 ANGSTROMS) OF 1-139 IN COMPLEX WITH USP10 AND CAPRIN1</scope>
    <scope>FUNCTION</scope>
    <scope>INTERACTION WITH CAPRIN1 AND USP10</scope>
</reference>
<feature type="initiator methionine" description="Removed" evidence="41">
    <location>
        <position position="1"/>
    </location>
</feature>
<feature type="chain" id="PRO_0000194798" description="Ras GTPase-activating protein-binding protein 1">
    <location>
        <begin position="2"/>
        <end position="466"/>
    </location>
</feature>
<feature type="domain" description="NTF2" evidence="2">
    <location>
        <begin position="11"/>
        <end position="133"/>
    </location>
</feature>
<feature type="domain" description="RRM" evidence="3">
    <location>
        <begin position="340"/>
        <end position="415"/>
    </location>
</feature>
<feature type="region of interest" description="Acidic disordered region" evidence="28 30">
    <location>
        <begin position="142"/>
        <end position="225"/>
    </location>
</feature>
<feature type="region of interest" description="Disordered" evidence="28 29 30">
    <location>
        <begin position="144"/>
        <end position="172"/>
    </location>
</feature>
<feature type="region of interest" description="Disordered" evidence="28 29 30">
    <location>
        <begin position="184"/>
        <end position="243"/>
    </location>
</feature>
<feature type="region of interest" description="Disordered" evidence="4">
    <location>
        <begin position="255"/>
        <end position="329"/>
    </location>
</feature>
<feature type="region of interest" description="RG-rich region" evidence="28 30">
    <location>
        <begin position="410"/>
        <end position="466"/>
    </location>
</feature>
<feature type="region of interest" description="Disordered" evidence="4">
    <location>
        <begin position="413"/>
        <end position="466"/>
    </location>
</feature>
<feature type="compositionally biased region" description="Acidic residues" evidence="4">
    <location>
        <begin position="145"/>
        <end position="157"/>
    </location>
</feature>
<feature type="compositionally biased region" description="Acidic residues" evidence="4">
    <location>
        <begin position="185"/>
        <end position="206"/>
    </location>
</feature>
<feature type="compositionally biased region" description="Basic and acidic residues" evidence="4">
    <location>
        <begin position="297"/>
        <end position="307"/>
    </location>
</feature>
<feature type="compositionally biased region" description="Basic and acidic residues" evidence="4">
    <location>
        <begin position="318"/>
        <end position="329"/>
    </location>
</feature>
<feature type="compositionally biased region" description="Basic and acidic residues" evidence="4">
    <location>
        <begin position="413"/>
        <end position="428"/>
    </location>
</feature>
<feature type="compositionally biased region" description="Gly residues" evidence="4">
    <location>
        <begin position="430"/>
        <end position="447"/>
    </location>
</feature>
<feature type="site" description="Cleavage; by human enterovirus 71 protease 3C" evidence="23">
    <location>
        <begin position="325"/>
        <end position="326"/>
    </location>
</feature>
<feature type="modified residue" description="Phosphothreonine" evidence="52">
    <location>
        <position position="143"/>
    </location>
</feature>
<feature type="modified residue" description="Phosphoserine" evidence="6 29 30 48 49 50 51 52 53 56 57 58 60">
    <location>
        <position position="149"/>
    </location>
</feature>
<feature type="modified residue" description="Phosphoserine" evidence="41">
    <location>
        <position position="231"/>
    </location>
</feature>
<feature type="modified residue" description="Phosphoserine" evidence="6 30 41 52 55 56 57 60">
    <location>
        <position position="232"/>
    </location>
</feature>
<feature type="modified residue" description="Phosphoserine" evidence="58">
    <location>
        <position position="250"/>
    </location>
</feature>
<feature type="modified residue" description="Phosphoserine" evidence="58">
    <location>
        <position position="253"/>
    </location>
</feature>
<feature type="modified residue" description="Phosphoserine" evidence="52 56">
    <location>
        <position position="373"/>
    </location>
</feature>
<feature type="modified residue" description="N6-acetyllysine; alternate" evidence="54">
    <location>
        <position position="376"/>
    </location>
</feature>
<feature type="modified residue" description="Asymmetric dimethylarginine" evidence="59">
    <location>
        <position position="429"/>
    </location>
</feature>
<feature type="modified residue" description="Asymmetric dimethylarginine; alternate" evidence="59">
    <location>
        <position position="435"/>
    </location>
</feature>
<feature type="modified residue" description="Dimethylated arginine; alternate" evidence="41">
    <location>
        <position position="435"/>
    </location>
</feature>
<feature type="modified residue" description="Omega-N-methylarginine; alternate" evidence="41 59">
    <location>
        <position position="435"/>
    </location>
</feature>
<feature type="modified residue" description="Omega-N-methylarginine" evidence="59">
    <location>
        <position position="447"/>
    </location>
</feature>
<feature type="modified residue" description="Dimethylated arginine; alternate" evidence="41">
    <location>
        <position position="460"/>
    </location>
</feature>
<feature type="modified residue" description="Omega-N-methylarginine; alternate" evidence="41 59">
    <location>
        <position position="460"/>
    </location>
</feature>
<feature type="modified residue" description="Omega-N-methylarginine" evidence="59">
    <location>
        <position position="465"/>
    </location>
</feature>
<feature type="cross-link" description="Glycyl lysine isopeptide (Lys-Gly) (interchain with G-Cter in ubiquitin)" evidence="31">
    <location>
        <position position="36"/>
    </location>
</feature>
<feature type="cross-link" description="Glycyl lysine isopeptide (Lys-Gly) (interchain with G-Cter in ubiquitin)" evidence="31">
    <location>
        <position position="50"/>
    </location>
</feature>
<feature type="cross-link" description="Glycyl lysine isopeptide (Lys-Gly) (interchain with G-Cter in ubiquitin)" evidence="31">
    <location>
        <position position="59"/>
    </location>
</feature>
<feature type="cross-link" description="Glycyl lysine isopeptide (Lys-Gly) (interchain with G-Cter in ubiquitin)" evidence="31">
    <location>
        <position position="64"/>
    </location>
</feature>
<feature type="cross-link" description="Glycyl lysine isopeptide (Lys-Gly) (interchain with G-Cter in ubiquitin)" evidence="45">
    <location>
        <position position="76"/>
    </location>
</feature>
<feature type="cross-link" description="Glycyl lysine isopeptide (Lys-Gly) (interchain with G-Cter in ubiquitin)" evidence="45">
    <location>
        <position position="123"/>
    </location>
</feature>
<feature type="cross-link" description="Glycyl lysine isopeptide (Lys-Gly) (interchain with G-Cter in ubiquitin)" evidence="45">
    <location>
        <position position="353"/>
    </location>
</feature>
<feature type="cross-link" description="Glycyl lysine isopeptide (Lys-Gly) (interchain with G-Cter in ubiquitin)" evidence="45">
    <location>
        <position position="357"/>
    </location>
</feature>
<feature type="cross-link" description="Glycyl lysine isopeptide (Lys-Gly) (interchain with G-Cter in SUMO2); alternate" evidence="61">
    <location>
        <position position="376"/>
    </location>
</feature>
<feature type="cross-link" description="Glycyl lysine isopeptide (Lys-Gly) (interchain with G-Cter in ubiquitin)" evidence="45">
    <location>
        <position position="376"/>
    </location>
</feature>
<feature type="cross-link" description="Glycyl lysine isopeptide (Lys-Gly) (interchain with G-Cter in ubiquitin); alternate" evidence="45">
    <location>
        <position position="393"/>
    </location>
</feature>
<feature type="splice variant" id="VSP_056280" description="In isoform 2." evidence="42 43">
    <original>GSVAN</original>
    <variation>SLKKK</variation>
    <location>
        <begin position="118"/>
        <end position="122"/>
    </location>
</feature>
<feature type="splice variant" id="VSP_056281" description="In isoform 2." evidence="42 43">
    <location>
        <begin position="123"/>
        <end position="466"/>
    </location>
</feature>
<feature type="sequence variant" id="VAR_088949" description="Found in a patient with a neurodevelopmental disorder; uncertain significance; decreased function in stress granule formation shown by rescue assays in transfected G3BP1-deficient cells." evidence="33">
    <original>R</original>
    <variation>C</variation>
    <location>
        <position position="78"/>
    </location>
</feature>
<feature type="sequence variant" id="VAR_088950" description="Found in a patient with a neurodevelopmental disorder; uncertain significance; decreased function in stress granule formation shown by rescue assays in transfected G3BP1-deficient cells." evidence="33">
    <original>R</original>
    <variation>I</variation>
    <location>
        <position position="132"/>
    </location>
</feature>
<feature type="sequence variant" id="VAR_088951" description="Found in a patient with a neurodevelopmental disorder; uncertain significance; decreased function in stress granule formation shown by rescue assays in transfected G3BP1-deficient cells." evidence="33">
    <original>S</original>
    <variation>C</variation>
    <location>
        <position position="208"/>
    </location>
</feature>
<feature type="sequence variant" id="VAR_088952" description="Found in a patient with a neurodevelopmental disorder; uncertain significance; decreased function in stress granule formation shown by rescue assays in transfected G3BP1-deficient cells." evidence="33">
    <original>R</original>
    <variation>C</variation>
    <location>
        <position position="320"/>
    </location>
</feature>
<feature type="sequence variant" id="VAR_088953" description="Found in a patient with a neurodevelopmental disorder; uncertain significance; no effect on function in stress granule formation shown by rescue assays in transfected G3BP1-deficient cells." evidence="33">
    <original>V</original>
    <variation>M</variation>
    <location>
        <position position="366"/>
    </location>
</feature>
<feature type="mutagenesis site" description="Decreased interaction with USP10." evidence="34">
    <original>F</original>
    <variation>W</variation>
    <location>
        <position position="15"/>
    </location>
</feature>
<feature type="mutagenesis site" description="Abolished interaction with CAPRIN1 and ability to undergo liquid-liquid phase separation. Abolished interaction with USP10." evidence="19 29 35">
    <original>F</original>
    <variation>W</variation>
    <location>
        <position position="33"/>
    </location>
</feature>
<feature type="mutagenesis site" description="In 10KR; abolished ubiquitination in response to heat shock, leading to decreased stress granule disassembly when associated with R-50, R-59, R-64, R-76, R-123, R-353, R-357, R-376 and R-393. In 6KR; strongly decreased ubiquitination in response to heat shock, leading to decreased stress granule disassembly; when associated with R-50, R-59, R-64, R-76 and R-123. In 4KR; decreased ubiquitination in response to heat shock, leading to slightly decreased stress granule disassembly; when associated with R-50, R-59 and R-64." evidence="31">
    <original>K</original>
    <variation>R</variation>
    <location>
        <position position="36"/>
    </location>
</feature>
<feature type="mutagenesis site" description="In 10KR; abolished ubiquitination in response to heat shock, leading to decreased stress granule disassembly when associated with R-36, R-59, R-64, R-76, R-123, R-353, R-357, R-376 and R-393. In 6KR; strongly decreased ubiquitination in response to heat shock, leading to decreased stress granule disassembly; when associated with R-36, R-59, R-64, R-76 and R-123. In 4KR; decreased ubiquitination in response to heat shock, leading to slightly decreased stress granule disassembly; when associated with R-36, R-59 and R-64." evidence="31">
    <original>K</original>
    <variation>R</variation>
    <location>
        <position position="50"/>
    </location>
</feature>
<feature type="mutagenesis site" description="In 10KR; abolished ubiquitination in response to heat shock, leading to decreased stress granule disassembly when associated with R-36, R-50, R-64, R-76, R-123, R-353, R-357, R-376 and R-393. In 6KR; strongly decreased ubiquitination in response to heat shock, leading to decreased stress granule disassembly; when associated with R-36, R-50, R-64, R-76 and R-123. In 4KR; decreased ubiquitination in response to heat shock, leading to slightly decreased stress granule disassembly; when associated with R-36, R-50 and R-64." evidence="31">
    <original>K</original>
    <variation>R</variation>
    <location>
        <position position="59"/>
    </location>
</feature>
<feature type="mutagenesis site" description="In 10KR; abolished ubiquitination in response to heat shock, leading to decreased stress granule disassembly when associated with R-36, R-50, R-59, R-76, R-123, R-353, R-357, R-376 and R-393. In 6KR; strongly decreased ubiquitination in response to heat shock, leading to decreased stress granule disassembly; when associated with R-36, R-50, R-59, R-76 and R-123. In 4KR; decreased ubiquitination in response to heat shock, leading to slightly decreased stress granule disassembly; when associated with R-36, R-50 and R-59." evidence="31">
    <original>K</original>
    <variation>R</variation>
    <location>
        <position position="64"/>
    </location>
</feature>
<feature type="mutagenesis site" description="In 10KR; abolished ubiquitination in response to heat shock, leading to decreased stress granule disassembly when associated with R-36, R-50, R-59, R-64, R-123, R-353, R-357, R-376 and R-393. In 6KR; strongly decreased ubiquitination in response to heat shock, leading to decreased stress granule disassembly; when associated with R-36, R-50, R-59, R-64 and R-123." evidence="31">
    <original>K</original>
    <variation>R</variation>
    <location>
        <position position="76"/>
    </location>
</feature>
<feature type="mutagenesis site" description="In 10KR; abolished ubiquitination in response to heat shock, leading to decreased stress granule disassembly when associated with R-36, R-50, R-59, R-64, R-76, R-353, R-357, R-376 and R-393. In 6KR; strongly decreased ubiquitination in response to heat shock, leading to decreased stress granule disassembly; when associated with R-36, R-50, R-59, R-64 and R-76." evidence="31">
    <original>K</original>
    <variation>R</variation>
    <location>
        <position position="123"/>
    </location>
</feature>
<feature type="mutagenesis site" description="Does not affect interaction with USP10." evidence="34">
    <original>F</original>
    <variation>W</variation>
    <location>
        <position position="124"/>
    </location>
</feature>
<feature type="mutagenesis site" description="Slightly increased ability to undergo liquid-liquid phase separation. Increased ability to undergo liquid-liquid phase separation; when associated with A-232. Cytoplasmic." evidence="6 7 29 30">
    <original>S</original>
    <variation>A</variation>
    <location>
        <position position="149"/>
    </location>
</feature>
<feature type="mutagenesis site" description="Mimics phosphorylation; decreased ability to undergo liquid-liquid phase separation. Cytoplasmic and nuclear; no assembly of stress granules; no homo-oligomerization." evidence="6 7 29">
    <original>S</original>
    <variation>E</variation>
    <location>
        <position position="149"/>
    </location>
</feature>
<feature type="mutagenesis site" description="Slightly increased ability to undergo liquid-liquid phase separation; when associated with A-149. Cytoplasmic. Partially nuclear; when associated with E-149." evidence="6 30">
    <original>S</original>
    <variation>A</variation>
    <location>
        <position position="232"/>
    </location>
</feature>
<feature type="mutagenesis site" description="Cytoplasmic. Partially nuclear; when associated with E-149." evidence="6">
    <original>S</original>
    <variation>E</variation>
    <location>
        <position position="232"/>
    </location>
</feature>
<feature type="mutagenesis site" description="Loss of cleavage by human enterovirus 71 protease 3C." evidence="23">
    <original>Q</original>
    <variation>G</variation>
    <location>
        <position position="325"/>
    </location>
</feature>
<feature type="mutagenesis site" description="In 10KR; abolished ubiquitination in response to heat shock, leading to decreased stress granule disassembly when associated with R-36, R-50, R-59, R-64, R-76, R-123,R-357, R-376 and R-393." evidence="31">
    <original>K</original>
    <variation>R</variation>
    <location>
        <position position="353"/>
    </location>
</feature>
<feature type="mutagenesis site" description="In 10KR; abolished ubiquitination in response to heat shock, leading to decreased stress granule disassembly when associated with R-36, R-50, R-59, R-64, R-76, R-123, R-353, R-376 and R-393." evidence="31">
    <original>K</original>
    <variation>R</variation>
    <location>
        <position position="357"/>
    </location>
</feature>
<feature type="mutagenesis site" description="In 10KR; abolished ubiquitination in response to heat shock, leading to decreased stress granule disassembly when associated with R-36, R-50, R-59, R-64, R-76, R-123, R-353, R-357 and R-393." evidence="31">
    <original>K</original>
    <variation>R</variation>
    <location>
        <position position="376"/>
    </location>
</feature>
<feature type="mutagenesis site" description="Abolished mRNA-binding and ability to undergo liquid-liquid phase separation." evidence="29">
    <original>FGF</original>
    <variation>GDG</variation>
    <location>
        <begin position="380"/>
        <end position="382"/>
    </location>
</feature>
<feature type="mutagenesis site" description="In 10KR; abolished ubiquitination in response to heat shock, leading to decreased stress granule disassembly when associated with R-36, R-50, R-59, R-64, R-76, R-123, R-353, R-357 and R-376." evidence="31">
    <original>K</original>
    <variation>R</variation>
    <location>
        <position position="393"/>
    </location>
</feature>
<feature type="helix" evidence="62">
    <location>
        <begin position="8"/>
        <end position="25"/>
    </location>
</feature>
<feature type="helix" evidence="62">
    <location>
        <begin position="27"/>
        <end position="33"/>
    </location>
</feature>
<feature type="strand" evidence="62">
    <location>
        <begin position="34"/>
        <end position="41"/>
    </location>
</feature>
<feature type="strand" evidence="64">
    <location>
        <begin position="49"/>
        <end position="51"/>
    </location>
</feature>
<feature type="helix" evidence="62">
    <location>
        <begin position="57"/>
        <end position="67"/>
    </location>
</feature>
<feature type="strand" evidence="62">
    <location>
        <begin position="74"/>
        <end position="84"/>
    </location>
</feature>
<feature type="helix" evidence="62">
    <location>
        <begin position="86"/>
        <end position="88"/>
    </location>
</feature>
<feature type="strand" evidence="62">
    <location>
        <begin position="90"/>
        <end position="99"/>
    </location>
</feature>
<feature type="helix" evidence="63">
    <location>
        <begin position="100"/>
        <end position="102"/>
    </location>
</feature>
<feature type="strand" evidence="62">
    <location>
        <begin position="106"/>
        <end position="116"/>
    </location>
</feature>
<feature type="strand" evidence="62">
    <location>
        <begin position="118"/>
        <end position="120"/>
    </location>
</feature>
<feature type="strand" evidence="62">
    <location>
        <begin position="124"/>
        <end position="134"/>
    </location>
</feature>
<feature type="helix" evidence="64">
    <location>
        <begin position="135"/>
        <end position="138"/>
    </location>
</feature>